<keyword id="KW-0002">3D-structure</keyword>
<keyword id="KW-0025">Alternative splicing</keyword>
<keyword id="KW-0067">ATP-binding</keyword>
<keyword id="KW-1003">Cell membrane</keyword>
<keyword id="KW-0966">Cell projection</keyword>
<keyword id="KW-0145">Chemotaxis</keyword>
<keyword id="KW-0217">Developmental protein</keyword>
<keyword id="KW-0225">Disease variant</keyword>
<keyword id="KW-1015">Disulfide bond</keyword>
<keyword id="KW-0325">Glycoprotein</keyword>
<keyword id="KW-0333">Golgi apparatus</keyword>
<keyword id="KW-0945">Host-virus interaction</keyword>
<keyword id="KW-0393">Immunoglobulin domain</keyword>
<keyword id="KW-0418">Kinase</keyword>
<keyword id="KW-0472">Membrane</keyword>
<keyword id="KW-0547">Nucleotide-binding</keyword>
<keyword id="KW-0597">Phosphoprotein</keyword>
<keyword id="KW-1267">Proteomics identification</keyword>
<keyword id="KW-0656">Proto-oncogene</keyword>
<keyword id="KW-0675">Receptor</keyword>
<keyword id="KW-1185">Reference proteome</keyword>
<keyword id="KW-0677">Repeat</keyword>
<keyword id="KW-0732">Signal</keyword>
<keyword id="KW-0808">Transferase</keyword>
<keyword id="KW-0812">Transmembrane</keyword>
<keyword id="KW-1133">Transmembrane helix</keyword>
<keyword id="KW-0829">Tyrosine-protein kinase</keyword>
<keyword id="KW-0832">Ubl conjugation</keyword>
<accession>P16234</accession>
<accession>B2RE69</accession>
<accession>E9PBH0</accession>
<accession>Q6P4H5</accession>
<accession>Q96KZ7</accession>
<accession>Q9UD28</accession>
<organism>
    <name type="scientific">Homo sapiens</name>
    <name type="common">Human</name>
    <dbReference type="NCBI Taxonomy" id="9606"/>
    <lineage>
        <taxon>Eukaryota</taxon>
        <taxon>Metazoa</taxon>
        <taxon>Chordata</taxon>
        <taxon>Craniata</taxon>
        <taxon>Vertebrata</taxon>
        <taxon>Euteleostomi</taxon>
        <taxon>Mammalia</taxon>
        <taxon>Eutheria</taxon>
        <taxon>Euarchontoglires</taxon>
        <taxon>Primates</taxon>
        <taxon>Haplorrhini</taxon>
        <taxon>Catarrhini</taxon>
        <taxon>Hominidae</taxon>
        <taxon>Homo</taxon>
    </lineage>
</organism>
<protein>
    <recommendedName>
        <fullName>Platelet-derived growth factor receptor alpha</fullName>
        <shortName>PDGF-R-alpha</shortName>
        <shortName>PDGFR-alpha</shortName>
        <ecNumber>2.7.10.1</ecNumber>
    </recommendedName>
    <alternativeName>
        <fullName>Alpha platelet-derived growth factor receptor</fullName>
    </alternativeName>
    <alternativeName>
        <fullName>Alpha-type platelet-derived growth factor receptor</fullName>
    </alternativeName>
    <alternativeName>
        <fullName>CD140 antigen-like family member A</fullName>
    </alternativeName>
    <alternativeName>
        <fullName>CD140a antigen</fullName>
    </alternativeName>
    <alternativeName>
        <fullName>Platelet-derived growth factor alpha receptor</fullName>
    </alternativeName>
    <alternativeName>
        <fullName>Platelet-derived growth factor receptor 2</fullName>
        <shortName>PDGFR-2</shortName>
    </alternativeName>
    <cdAntigenName>CD140a</cdAntigenName>
</protein>
<name>PGFRA_HUMAN</name>
<reference key="1">
    <citation type="journal article" date="1989" name="Proc. Natl. Acad. Sci. U.S.A.">
        <title>cDNA cloning and expression of the human A-type platelet-derived growth factor (PDGF) receptor establishes structural similarity to the B-type PDGF receptor.</title>
        <authorList>
            <person name="Claesson-Welsh L."/>
            <person name="Eriksson A."/>
            <person name="Westermark B."/>
            <person name="Heldin C.H."/>
        </authorList>
    </citation>
    <scope>NUCLEOTIDE SEQUENCE [MRNA] (ISOFORM 1)</scope>
    <scope>INTERACTION WITH PDGFA AND PDGFB</scope>
    <source>
        <tissue>Foreskin</tissue>
    </source>
</reference>
<reference key="2">
    <citation type="journal article" date="1989" name="Science">
        <title>Isolation of a novel receptor cDNA establishes the existence of two PDGF receptor genes.</title>
        <authorList>
            <person name="Matsui T."/>
            <person name="Heidaran M."/>
            <person name="Miki T."/>
            <person name="Popescu N."/>
            <person name="la Rochelle W."/>
            <person name="Kraus M."/>
            <person name="Pierce J."/>
            <person name="Aaronson S."/>
        </authorList>
    </citation>
    <scope>NUCLEOTIDE SEQUENCE [MRNA] (ISOFORM 1)</scope>
    <scope>AUTOPHOSPHORYLATION</scope>
    <scope>TISSUE SPECIFICITY</scope>
    <scope>INTERACTION WITH PDGFA AND PDGFB</scope>
    <source>
        <tissue>Brain</tissue>
    </source>
</reference>
<reference key="3">
    <citation type="journal article" date="1995" name="Genomics">
        <title>Structure, organization, and transcription units of the human alpha-platelet-derived growth factor receptor gene, PDGFRA.</title>
        <authorList>
            <person name="Kawagishi J."/>
            <person name="Ku T."/>
        </authorList>
    </citation>
    <scope>NUCLEOTIDE SEQUENCE [GENOMIC DNA]</scope>
    <source>
        <tissue>Blood</tissue>
    </source>
</reference>
<reference key="4">
    <citation type="journal article" date="2004" name="Nat. Genet.">
        <title>Complete sequencing and characterization of 21,243 full-length human cDNAs.</title>
        <authorList>
            <person name="Ota T."/>
            <person name="Suzuki Y."/>
            <person name="Nishikawa T."/>
            <person name="Otsuki T."/>
            <person name="Sugiyama T."/>
            <person name="Irie R."/>
            <person name="Wakamatsu A."/>
            <person name="Hayashi K."/>
            <person name="Sato H."/>
            <person name="Nagai K."/>
            <person name="Kimura K."/>
            <person name="Makita H."/>
            <person name="Sekine M."/>
            <person name="Obayashi M."/>
            <person name="Nishi T."/>
            <person name="Shibahara T."/>
            <person name="Tanaka T."/>
            <person name="Ishii S."/>
            <person name="Yamamoto J."/>
            <person name="Saito K."/>
            <person name="Kawai Y."/>
            <person name="Isono Y."/>
            <person name="Nakamura Y."/>
            <person name="Nagahari K."/>
            <person name="Murakami K."/>
            <person name="Yasuda T."/>
            <person name="Iwayanagi T."/>
            <person name="Wagatsuma M."/>
            <person name="Shiratori A."/>
            <person name="Sudo H."/>
            <person name="Hosoiri T."/>
            <person name="Kaku Y."/>
            <person name="Kodaira H."/>
            <person name="Kondo H."/>
            <person name="Sugawara M."/>
            <person name="Takahashi M."/>
            <person name="Kanda K."/>
            <person name="Yokoi T."/>
            <person name="Furuya T."/>
            <person name="Kikkawa E."/>
            <person name="Omura Y."/>
            <person name="Abe K."/>
            <person name="Kamihara K."/>
            <person name="Katsuta N."/>
            <person name="Sato K."/>
            <person name="Tanikawa M."/>
            <person name="Yamazaki M."/>
            <person name="Ninomiya K."/>
            <person name="Ishibashi T."/>
            <person name="Yamashita H."/>
            <person name="Murakawa K."/>
            <person name="Fujimori K."/>
            <person name="Tanai H."/>
            <person name="Kimata M."/>
            <person name="Watanabe M."/>
            <person name="Hiraoka S."/>
            <person name="Chiba Y."/>
            <person name="Ishida S."/>
            <person name="Ono Y."/>
            <person name="Takiguchi S."/>
            <person name="Watanabe S."/>
            <person name="Yosida M."/>
            <person name="Hotuta T."/>
            <person name="Kusano J."/>
            <person name="Kanehori K."/>
            <person name="Takahashi-Fujii A."/>
            <person name="Hara H."/>
            <person name="Tanase T.-O."/>
            <person name="Nomura Y."/>
            <person name="Togiya S."/>
            <person name="Komai F."/>
            <person name="Hara R."/>
            <person name="Takeuchi K."/>
            <person name="Arita M."/>
            <person name="Imose N."/>
            <person name="Musashino K."/>
            <person name="Yuuki H."/>
            <person name="Oshima A."/>
            <person name="Sasaki N."/>
            <person name="Aotsuka S."/>
            <person name="Yoshikawa Y."/>
            <person name="Matsunawa H."/>
            <person name="Ichihara T."/>
            <person name="Shiohata N."/>
            <person name="Sano S."/>
            <person name="Moriya S."/>
            <person name="Momiyama H."/>
            <person name="Satoh N."/>
            <person name="Takami S."/>
            <person name="Terashima Y."/>
            <person name="Suzuki O."/>
            <person name="Nakagawa S."/>
            <person name="Senoh A."/>
            <person name="Mizoguchi H."/>
            <person name="Goto Y."/>
            <person name="Shimizu F."/>
            <person name="Wakebe H."/>
            <person name="Hishigaki H."/>
            <person name="Watanabe T."/>
            <person name="Sugiyama A."/>
            <person name="Takemoto M."/>
            <person name="Kawakami B."/>
            <person name="Yamazaki M."/>
            <person name="Watanabe K."/>
            <person name="Kumagai A."/>
            <person name="Itakura S."/>
            <person name="Fukuzumi Y."/>
            <person name="Fujimori Y."/>
            <person name="Komiyama M."/>
            <person name="Tashiro H."/>
            <person name="Tanigami A."/>
            <person name="Fujiwara T."/>
            <person name="Ono T."/>
            <person name="Yamada K."/>
            <person name="Fujii Y."/>
            <person name="Ozaki K."/>
            <person name="Hirao M."/>
            <person name="Ohmori Y."/>
            <person name="Kawabata A."/>
            <person name="Hikiji T."/>
            <person name="Kobatake N."/>
            <person name="Inagaki H."/>
            <person name="Ikema Y."/>
            <person name="Okamoto S."/>
            <person name="Okitani R."/>
            <person name="Kawakami T."/>
            <person name="Noguchi S."/>
            <person name="Itoh T."/>
            <person name="Shigeta K."/>
            <person name="Senba T."/>
            <person name="Matsumura K."/>
            <person name="Nakajima Y."/>
            <person name="Mizuno T."/>
            <person name="Morinaga M."/>
            <person name="Sasaki M."/>
            <person name="Togashi T."/>
            <person name="Oyama M."/>
            <person name="Hata H."/>
            <person name="Watanabe M."/>
            <person name="Komatsu T."/>
            <person name="Mizushima-Sugano J."/>
            <person name="Satoh T."/>
            <person name="Shirai Y."/>
            <person name="Takahashi Y."/>
            <person name="Nakagawa K."/>
            <person name="Okumura K."/>
            <person name="Nagase T."/>
            <person name="Nomura N."/>
            <person name="Kikuchi H."/>
            <person name="Masuho Y."/>
            <person name="Yamashita R."/>
            <person name="Nakai K."/>
            <person name="Yada T."/>
            <person name="Nakamura Y."/>
            <person name="Ohara O."/>
            <person name="Isogai T."/>
            <person name="Sugano S."/>
        </authorList>
    </citation>
    <scope>NUCLEOTIDE SEQUENCE [LARGE SCALE MRNA] (ISOFORM 1)</scope>
    <scope>VARIANT PRO-478</scope>
    <source>
        <tissue>Lung</tissue>
        <tissue>Trachea</tissue>
    </source>
</reference>
<reference key="5">
    <citation type="journal article" date="2005" name="Nature">
        <title>Generation and annotation of the DNA sequences of human chromosomes 2 and 4.</title>
        <authorList>
            <person name="Hillier L.W."/>
            <person name="Graves T.A."/>
            <person name="Fulton R.S."/>
            <person name="Fulton L.A."/>
            <person name="Pepin K.H."/>
            <person name="Minx P."/>
            <person name="Wagner-McPherson C."/>
            <person name="Layman D."/>
            <person name="Wylie K."/>
            <person name="Sekhon M."/>
            <person name="Becker M.C."/>
            <person name="Fewell G.A."/>
            <person name="Delehaunty K.D."/>
            <person name="Miner T.L."/>
            <person name="Nash W.E."/>
            <person name="Kremitzki C."/>
            <person name="Oddy L."/>
            <person name="Du H."/>
            <person name="Sun H."/>
            <person name="Bradshaw-Cordum H."/>
            <person name="Ali J."/>
            <person name="Carter J."/>
            <person name="Cordes M."/>
            <person name="Harris A."/>
            <person name="Isak A."/>
            <person name="van Brunt A."/>
            <person name="Nguyen C."/>
            <person name="Du F."/>
            <person name="Courtney L."/>
            <person name="Kalicki J."/>
            <person name="Ozersky P."/>
            <person name="Abbott S."/>
            <person name="Armstrong J."/>
            <person name="Belter E.A."/>
            <person name="Caruso L."/>
            <person name="Cedroni M."/>
            <person name="Cotton M."/>
            <person name="Davidson T."/>
            <person name="Desai A."/>
            <person name="Elliott G."/>
            <person name="Erb T."/>
            <person name="Fronick C."/>
            <person name="Gaige T."/>
            <person name="Haakenson W."/>
            <person name="Haglund K."/>
            <person name="Holmes A."/>
            <person name="Harkins R."/>
            <person name="Kim K."/>
            <person name="Kruchowski S.S."/>
            <person name="Strong C.M."/>
            <person name="Grewal N."/>
            <person name="Goyea E."/>
            <person name="Hou S."/>
            <person name="Levy A."/>
            <person name="Martinka S."/>
            <person name="Mead K."/>
            <person name="McLellan M.D."/>
            <person name="Meyer R."/>
            <person name="Randall-Maher J."/>
            <person name="Tomlinson C."/>
            <person name="Dauphin-Kohlberg S."/>
            <person name="Kozlowicz-Reilly A."/>
            <person name="Shah N."/>
            <person name="Swearengen-Shahid S."/>
            <person name="Snider J."/>
            <person name="Strong J.T."/>
            <person name="Thompson J."/>
            <person name="Yoakum M."/>
            <person name="Leonard S."/>
            <person name="Pearman C."/>
            <person name="Trani L."/>
            <person name="Radionenko M."/>
            <person name="Waligorski J.E."/>
            <person name="Wang C."/>
            <person name="Rock S.M."/>
            <person name="Tin-Wollam A.-M."/>
            <person name="Maupin R."/>
            <person name="Latreille P."/>
            <person name="Wendl M.C."/>
            <person name="Yang S.-P."/>
            <person name="Pohl C."/>
            <person name="Wallis J.W."/>
            <person name="Spieth J."/>
            <person name="Bieri T.A."/>
            <person name="Berkowicz N."/>
            <person name="Nelson J.O."/>
            <person name="Osborne J."/>
            <person name="Ding L."/>
            <person name="Meyer R."/>
            <person name="Sabo A."/>
            <person name="Shotland Y."/>
            <person name="Sinha P."/>
            <person name="Wohldmann P.E."/>
            <person name="Cook L.L."/>
            <person name="Hickenbotham M.T."/>
            <person name="Eldred J."/>
            <person name="Williams D."/>
            <person name="Jones T.A."/>
            <person name="She X."/>
            <person name="Ciccarelli F.D."/>
            <person name="Izaurralde E."/>
            <person name="Taylor J."/>
            <person name="Schmutz J."/>
            <person name="Myers R.M."/>
            <person name="Cox D.R."/>
            <person name="Huang X."/>
            <person name="McPherson J.D."/>
            <person name="Mardis E.R."/>
            <person name="Clifton S.W."/>
            <person name="Warren W.C."/>
            <person name="Chinwalla A.T."/>
            <person name="Eddy S.R."/>
            <person name="Marra M.A."/>
            <person name="Ovcharenko I."/>
            <person name="Furey T.S."/>
            <person name="Miller W."/>
            <person name="Eichler E.E."/>
            <person name="Bork P."/>
            <person name="Suyama M."/>
            <person name="Torrents D."/>
            <person name="Waterston R.H."/>
            <person name="Wilson R.K."/>
        </authorList>
    </citation>
    <scope>NUCLEOTIDE SEQUENCE [LARGE SCALE GENOMIC DNA]</scope>
</reference>
<reference key="6">
    <citation type="journal article" date="2004" name="Genome Res.">
        <title>The status, quality, and expansion of the NIH full-length cDNA project: the Mammalian Gene Collection (MGC).</title>
        <authorList>
            <consortium name="The MGC Project Team"/>
        </authorList>
    </citation>
    <scope>NUCLEOTIDE SEQUENCE [LARGE SCALE MRNA] (ISOFORMS 2 AND 3)</scope>
    <scope>VARIANT PRO-478</scope>
    <source>
        <tissue>Placenta</tissue>
    </source>
</reference>
<reference key="7">
    <citation type="journal article" date="2003" name="Proc. Natl. Acad. Sci. U.S.A.">
        <title>Discovery of a fusion kinase in EOL-1 cells and idiopathic hypereosinophilic syndrome.</title>
        <authorList>
            <person name="Griffin J.H."/>
            <person name="Leung J."/>
            <person name="Bruner R.J."/>
            <person name="Caligiuri M.A."/>
            <person name="Briesewitz R."/>
        </authorList>
    </citation>
    <scope>NUCLEOTIDE SEQUENCE [MRNA] OF 579-1089</scope>
    <scope>DISEASE</scope>
    <scope>IDENTIFICATION BY MASS SPECTROMETRY OF FIP1L1-PDGFRA FUSION PROTEIN</scope>
    <source>
        <tissue>Eosinophil</tissue>
    </source>
</reference>
<reference key="8">
    <citation type="journal article" date="1995" name="Int. J. Cancer">
        <title>Receptor tyrosine kinases expressed in metastatic colon cancer.</title>
        <authorList>
            <person name="Craven R.J."/>
            <person name="Xu L.H."/>
            <person name="Weiner T.M."/>
            <person name="Fridell Y.-W."/>
            <person name="Dent G.A."/>
            <person name="Srivastava S."/>
            <person name="Varnum B."/>
            <person name="Liu E.T."/>
            <person name="Cance W.G."/>
        </authorList>
    </citation>
    <scope>NUCLEOTIDE SEQUENCE [MRNA] OF 823-876</scope>
    <scope>TISSUE SPECIFICITY</scope>
    <source>
        <tissue>Colon tumor</tissue>
    </source>
</reference>
<reference key="9">
    <citation type="journal article" date="1989" name="Proc. Natl. Acad. Sci. U.S.A.">
        <title>Independent expression of human alpha or beta platelet-derived growth factor receptor cDNAs in a naive hematopoietic cell leads to functional coupling with mitogenic and chemotactic signaling pathways.</title>
        <authorList>
            <person name="Matsui T."/>
            <person name="Pierce J.H."/>
            <person name="Fleming T.P."/>
            <person name="Greenberger J.S."/>
            <person name="LaRochelle W.J."/>
            <person name="Ruggiero M."/>
            <person name="Aaronson S.A."/>
        </authorList>
    </citation>
    <scope>FUNCTION AS PDGFA AND PDGFB RECEPTOR IN CELL PROLIFERATION AND CHEMOTAXIS</scope>
    <scope>SUBCELLULAR LOCATION</scope>
</reference>
<reference key="10">
    <citation type="journal article" date="1990" name="Science">
        <title>Binding of SH2 domains of phospholipase C gamma 1, GAP, and Src to activated growth factor receptors.</title>
        <authorList>
            <person name="Anderson D."/>
            <person name="Koch C.A."/>
            <person name="Grey L."/>
            <person name="Ellis C."/>
            <person name="Moran M.F."/>
            <person name="Pawson T."/>
        </authorList>
    </citation>
    <scope>INTERACTION WITH PLCG1 AND SRC</scope>
</reference>
<reference key="11">
    <citation type="journal article" date="1991" name="J. Biol. Chem.">
        <title>Platelet-derived growth factor (PDGF) stimulates PDGF receptor subunit dimerization and intersubunit trans-phosphorylation.</title>
        <authorList>
            <person name="Kelly J.D."/>
            <person name="Haldeman B.A."/>
            <person name="Grant F.J."/>
            <person name="Murray M.J."/>
            <person name="Seifert R.A."/>
            <person name="Bowen-Pope D.F."/>
            <person name="Cooper J.A."/>
            <person name="Kazlauskas A."/>
        </authorList>
    </citation>
    <scope>INTERACTION WITH PDGFRA; PDGFA AND PDGFB</scope>
    <scope>FUNCTION AS RECEPTOR FOR PDGFA AND PDGFB</scope>
    <scope>AUTOPHOSPHORYLATION</scope>
</reference>
<reference key="12">
    <citation type="journal article" date="1991" name="Mol. Cell. Biol.">
        <title>Tyrosine mutations within the alpha platelet-derived growth factor receptor kinase insert domain abrogate receptor-associated phosphatidylinositol-3 kinase activity without affecting mitogenic or chemotactic signal transduction.</title>
        <authorList>
            <person name="Yu J.C."/>
            <person name="Heidaran M.A."/>
            <person name="Pierce J.H."/>
            <person name="Gutkind J.S."/>
            <person name="Lombardi D."/>
            <person name="Ruggiero M."/>
            <person name="Aaronson S.A."/>
        </authorList>
    </citation>
    <scope>FUNCTION AS PDGFB RECEPTOR IN CHEMOTAXIS; CELL PROLIFERATION; PHOSPHORYLATION OF PLCG1; ACTIVATION OF PHOSPHATIDYLINOSITOL 3-KINASE AND REGULATION OF PHOSPHATIDYLINOSITOL METABOLISM</scope>
    <scope>INTERACTION WITH PIK3R</scope>
    <scope>PHOSPHORYLATION AT TYR-731 AND TYR-742</scope>
    <scope>MUTAGENESIS OF TYR-731 AND TYR-742</scope>
</reference>
<reference key="13">
    <citation type="journal article" date="1993" name="J. Biol. Chem.">
        <title>Mechanism of platelet-derived growth factor (PDGF) AA, AB, and BB binding to alpha and beta PDGF receptor.</title>
        <authorList>
            <person name="Fretto L.J."/>
            <person name="Snape A.J."/>
            <person name="Tomlinson J.E."/>
            <person name="Seroogy J.J."/>
            <person name="Wolf D.L."/>
            <person name="LaRochelle W.J."/>
            <person name="Giese N.A."/>
        </authorList>
    </citation>
    <scope>INTERACTION WITH PDGFA AND PDGFB</scope>
</reference>
<reference key="14">
    <citation type="journal article" date="1994" name="J. Biol. Chem.">
        <title>Negative feedback regulation of human platelets via autocrine activation of the platelet-derived growth factor alpha-receptor.</title>
        <authorList>
            <person name="Vassbotn F.S."/>
            <person name="Havnen O.K."/>
            <person name="Heldin C.H."/>
            <person name="Holmsen H."/>
        </authorList>
    </citation>
    <scope>FUNCTION AS PDGFA RECEPTOR IN REGULATION OF PLATELET ACTIVATION</scope>
    <scope>SUBCELLULAR LOCATION</scope>
    <scope>AUTOPHOSPHORYLATION</scope>
    <scope>TISSUE SPECIFICITY</scope>
</reference>
<reference key="15">
    <citation type="journal article" date="1995" name="J. Biol. Chem.">
        <title>Demonstration of functionally different interactions between phospholipase C-gamma and the two types of platelet-derived growth factor receptors.</title>
        <authorList>
            <person name="Eriksson A."/>
            <person name="Naanberg E."/>
            <person name="Roennstrand L."/>
            <person name="Engstroem U."/>
            <person name="Hellman U."/>
            <person name="Rupp E."/>
            <person name="Carpenter G."/>
            <person name="Heldin C.H."/>
            <person name="Claesson-Welsh L."/>
        </authorList>
    </citation>
    <scope>PHOSPHORYLATION AT TYR-988 AND TYR-1018</scope>
    <scope>INTERACTION WITH PLCG1</scope>
</reference>
<reference key="16">
    <citation type="journal article" date="1996" name="Am. J. Physiol.">
        <title>Maximal PDGF-induced lung fibroblast chemotaxis requires PDGF receptor-alpha.</title>
        <authorList>
            <person name="Osornio-Vargas A.R."/>
            <person name="Lindroos P.M."/>
            <person name="Coin P.G."/>
            <person name="Badgett A."/>
            <person name="Hernandez-Rodriguez N.A."/>
            <person name="Bonner J.C."/>
        </authorList>
    </citation>
    <scope>FUNCTION IN PROMOTING CHEMOTAXIS</scope>
</reference>
<reference key="17">
    <citation type="journal article" date="1996" name="J. Biol. Chem.">
        <title>Structural determinants in the platelet-derived growth factor alpha-receptor implicated in modulation of chemotaxis.</title>
        <authorList>
            <person name="Yokote K."/>
            <person name="Mori S."/>
            <person name="Siegbahn A."/>
            <person name="Ronnstrand L."/>
            <person name="Wernstedt C."/>
            <person name="Heldin C.H."/>
            <person name="Claesson-Welsh L."/>
        </authorList>
    </citation>
    <scope>PHOSPHORYLATION AT TYR-768</scope>
</reference>
<reference key="18">
    <citation type="journal article" date="1996" name="J. Biol. Chem.">
        <title>Grb7 is a downstream signaling component of platelet-derived growth factor alpha- and beta-receptors.</title>
        <authorList>
            <person name="Yokote K."/>
            <person name="Margolis B."/>
            <person name="Heldin C.H."/>
            <person name="Claesson-Welsh L."/>
        </authorList>
    </citation>
    <scope>INTERACTION WITH GRB7 AND PIK3R1</scope>
</reference>
<reference key="19">
    <citation type="journal article" date="1996" name="Mol. Cell. Biol.">
        <title>Phosphorylation of tyrosine 720 in the platelet-derived growth factor alpha receptor is required for binding of Grb2 and SHP-2 but not for activation of Ras or cell proliferation.</title>
        <authorList>
            <person name="Bazenet C.E."/>
            <person name="Gelderloos J.A."/>
            <person name="Kazlauskas A."/>
        </authorList>
    </citation>
    <scope>FUNCTION IN PHOSPHORYLATION OF PTPN11; ACTIVATION OF HRAS AND REGULATION OF CELL PROLIFERATION</scope>
    <scope>PHOSPHORYLATION AT TYR-720</scope>
    <scope>INTERACTION WITH GRB2; PTPN11; PLCG1 AND PIK3R1</scope>
    <scope>AUTOPHOSPHORYLATION</scope>
    <scope>MUTAGENESIS OF TYR-720</scope>
</reference>
<reference key="20">
    <citation type="journal article" date="2000" name="Biochem. Biophys. Res. Commun.">
        <title>Differential interaction of CrkII adaptor protein with platelet-derived growth factor alpha- and beta-receptors is determined by its internal tyrosine phosphorylation.</title>
        <authorList>
            <person name="Matsumoto T."/>
            <person name="Yokote K."/>
            <person name="Take A."/>
            <person name="Takemoto M."/>
            <person name="Asaumi S."/>
            <person name="Hashimoto Y."/>
            <person name="Matsuda M."/>
            <person name="Saito Y."/>
            <person name="Mori S."/>
        </authorList>
    </citation>
    <scope>INTERACTION WITH CRK</scope>
    <scope>PHOSPHORYLATION AT TYR-762</scope>
    <scope>MUTAGENESIS OF TYR-762</scope>
</reference>
<reference key="21">
    <citation type="journal article" date="2000" name="Biochem. Biophys. Res. Commun.">
        <title>Shf, a Shb-like adapter protein, is involved in PDGF-alpha-receptor regulation of apoptosis.</title>
        <authorList>
            <person name="Lindholm C.K."/>
            <person name="Frantz J.D."/>
            <person name="Shoelson S.E."/>
            <person name="Welsh M."/>
        </authorList>
    </citation>
    <scope>INTERACTION WITH SHF</scope>
    <scope>PHOSPHORYLATION AT TYR-720</scope>
</reference>
<reference key="22">
    <citation type="journal article" date="2000" name="Biochem. J.">
        <title>Platelet-derived-growth-factor-induced signalling in human platelets: phosphoinositide-3-kinase-dependent inhibition of platelet activation.</title>
        <authorList>
            <person name="Selheim F."/>
            <person name="Fukami M.H."/>
            <person name="Holmsen H."/>
            <person name="Vassbotn F.S."/>
        </authorList>
    </citation>
    <scope>FUNCTION IN PLATELET ACTIVATION</scope>
</reference>
<reference key="23">
    <citation type="journal article" date="2000" name="J. Biol. Chem.">
        <title>Src family kinases negatively regulate platelet-derived growth factor alpha receptor-dependent signaling and disease progression.</title>
        <authorList>
            <person name="Rosenkranz S."/>
            <person name="Ikuno Y."/>
            <person name="Leong F.L."/>
            <person name="Klinghoffer R.A."/>
            <person name="Miyake S."/>
            <person name="Band H."/>
            <person name="Kazlauskas A."/>
        </authorList>
    </citation>
    <scope>FUNCTION IN ACTIVATION OF MAPK1/ERK2 AND/OR MAPK3/ERK1</scope>
    <scope>DEGRADATION</scope>
    <scope>PHOSPHORYLATION AT TYR-572 AND TYR-574</scope>
    <scope>MUTAGENESIS OF TYR-572 AND TYR-574</scope>
</reference>
<reference key="24">
    <citation type="journal article" date="2001" name="J. Biol. Chem.">
        <title>Platelet-derived growth factor C (PDGF-C), a novel growth factor that binds to PDGF alpha and beta receptor.</title>
        <authorList>
            <person name="Gilbertson D.G."/>
            <person name="Duff M.E."/>
            <person name="West J.W."/>
            <person name="Kelly J.D."/>
            <person name="Sheppard P.O."/>
            <person name="Hofstrand P.D."/>
            <person name="Gao Z."/>
            <person name="Shoemaker K."/>
            <person name="Bukowski T.R."/>
            <person name="Moore M."/>
            <person name="Feldhaus A.L."/>
            <person name="Humes J.M."/>
            <person name="Palmer T.E."/>
            <person name="Hart C.E."/>
        </authorList>
    </citation>
    <scope>FUNCTION AS A RECEPTOR FOR PDGFC</scope>
    <scope>INTERACTION WITH PDGFC</scope>
</reference>
<reference key="25">
    <citation type="journal article" date="2003" name="Exp. Cell Res.">
        <title>The role of c-Src in platelet-derived growth factor alpha receptor internalization.</title>
        <authorList>
            <person name="Avrov K."/>
            <person name="Kazlauskas A."/>
        </authorList>
    </citation>
    <scope>SUBCELLULAR LOCATION</scope>
    <scope>INTERACTION WITH SRC</scope>
    <scope>MUTAGENESIS OF TYR-572 AND TYR-574</scope>
</reference>
<reference key="26">
    <citation type="journal article" date="2003" name="N. Engl. J. Med.">
        <title>A tyrosine kinase created by fusion of the PDGFRA and FIP1L1 genes as a therapeutic target of imatinib in idiopathic hypereosinophilic syndrome.</title>
        <authorList>
            <person name="Cools J."/>
            <person name="DeAngelo D.J."/>
            <person name="Gotlib J."/>
            <person name="Stover E.H."/>
            <person name="Legare R.D."/>
            <person name="Cortes J."/>
            <person name="Kutok J."/>
            <person name="Clark J."/>
            <person name="Galinsky I."/>
            <person name="Griffin J.D."/>
            <person name="Cross N.C."/>
            <person name="Tefferi A."/>
            <person name="Malone J."/>
            <person name="Alam R."/>
            <person name="Schrier S.L."/>
            <person name="Schmid J."/>
            <person name="Rose M."/>
            <person name="Vandenberghe P."/>
            <person name="Verhoef G."/>
            <person name="Boogaerts M."/>
            <person name="Wlodarska I."/>
            <person name="Kantarjian H."/>
            <person name="Marynen P."/>
            <person name="Coutre S.E."/>
            <person name="Stone R."/>
            <person name="Gilliland D.G."/>
        </authorList>
    </citation>
    <scope>INVOLVEMENT IN HES</scope>
</reference>
<reference key="27">
    <citation type="journal article" date="2003" name="Science">
        <title>PDGFRA activating mutations in gastrointestinal stromal tumors.</title>
        <authorList>
            <person name="Heinrich M.C."/>
            <person name="Corless C.L."/>
            <person name="Duensing A."/>
            <person name="McGreevey L."/>
            <person name="Chen C.J."/>
            <person name="Joseph N."/>
            <person name="Singer S."/>
            <person name="Griffith D.J."/>
            <person name="Haley A."/>
            <person name="Town A."/>
            <person name="Demetri G.D."/>
            <person name="Fletcher C.D."/>
            <person name="Fletcher J.A."/>
        </authorList>
    </citation>
    <scope>FUNCTION IN PHOSPHORYLATION OF AKT1; MAP KINASES; STAT1 AND STAT3</scope>
    <scope>INVOLVEMENT IN GIST</scope>
    <scope>VARIANTS ASP-561; VAL-842; 842-ASP--HIS-845 DEL AND 845-HIS--PRO-448 DEL</scope>
    <scope>CHARACTERIZATION OF VARIANTS ASP-561; VAL-842; 842-ASP--HIS-845 DEL AND 845-HIS--PRO-448 DEL</scope>
</reference>
<reference key="28">
    <citation type="journal article" date="2005" name="J. Clin. Oncol.">
        <title>PDGFRA mutations in gastrointestinal stromal tumors: frequency, spectrum and in vitro sensitivity to imatinib.</title>
        <authorList>
            <person name="Corless C.L."/>
            <person name="Schroeder A."/>
            <person name="Griffith D."/>
            <person name="Town A."/>
            <person name="McGreevey L."/>
            <person name="Harrell P."/>
            <person name="Shiraga S."/>
            <person name="Bainbridge T."/>
            <person name="Morich J."/>
            <person name="Heinrich M.C."/>
        </authorList>
    </citation>
    <scope>INVOLVEMENT IN GIST</scope>
    <scope>VARIANTS ASP-561; LYS-659; TYR-842; VAL-842; 842-ASP--HIS-845 DEL; 845-HIS--PRO-448 DEL AND CYS-849</scope>
    <scope>CHARACTERIZATION OF VARIANTS ASP-561; LYS-659; TYR-842; VAL-842; 842-ASP--HIS-845 DEL; 845-HIS--PRO-448 DEL AND CYS-849</scope>
    <scope>ACTIVITY REGULATION</scope>
</reference>
<reference key="29">
    <citation type="journal article" date="2006" name="FEBS Lett.">
        <title>PI3-kinase/Akt-dependent antiapoptotic signaling by the PDGF alpha receptor is negatively regulated by Src family kinases.</title>
        <authorList>
            <person name="Vantler M."/>
            <person name="Huntgeburth M."/>
            <person name="Caglayan E."/>
            <person name="Ten Freyhaus H."/>
            <person name="Schnabel P."/>
            <person name="Rosenkranz S."/>
        </authorList>
    </citation>
    <scope>FUNCTION IN CELL SURVIVAL</scope>
</reference>
<reference key="30">
    <citation type="journal article" date="2007" name="Mol. Cancer Ther.">
        <title>Platelet-derived growth factor receptor-alpha: a novel therapeutic target in human hepatocellular cancer.</title>
        <authorList>
            <person name="Stock P."/>
            <person name="Monga D."/>
            <person name="Tan X."/>
            <person name="Micsenyi A."/>
            <person name="Loizos N."/>
            <person name="Monga S.P."/>
        </authorList>
    </citation>
    <scope>PHOSPHORYLATION AT TYR-754</scope>
</reference>
<reference key="31">
    <citation type="journal article" date="2010" name="J. Virol.">
        <title>The glycoprotein B disintegrin-like domain binds beta 1 integrin to mediate cytomegalovirus entry.</title>
        <authorList>
            <person name="Feire A.L."/>
            <person name="Roy R.M."/>
            <person name="Manley K."/>
            <person name="Compton T."/>
        </authorList>
    </citation>
    <scope>INTERACTION WITH HHV-5 GB (MICROBIAL INFECTION)</scope>
</reference>
<reference key="32">
    <citation type="journal article" date="2011" name="Blood">
        <title>Novel imatinib-sensitive PDGFRA-activating point mutations in hypereosinophilic syndrome induce growth factor independence and leukemia-like disease.</title>
        <authorList>
            <person name="Elling C."/>
            <person name="Erben P."/>
            <person name="Walz C."/>
            <person name="Frickenhaus M."/>
            <person name="Schemionek M."/>
            <person name="Stehling M."/>
            <person name="Serve H."/>
            <person name="Cross N.C."/>
            <person name="Hochhaus A."/>
            <person name="Hofmann W.K."/>
            <person name="Berdel W.E."/>
            <person name="Muller-Tidow C."/>
            <person name="Reiter A."/>
            <person name="Koschmieder S."/>
        </authorList>
    </citation>
    <scope>FUNCTION IN PHOSPHORYLATION OF STAT 5A AND/OR STAT5B</scope>
    <scope>ROLE IN HYPEREOSINOPHILIC SYNDROME</scope>
    <scope>VARIANTS GLY-481; PRO-507; MET-562; ARG-570; GLN-650; SER-659; PRO-705; GLY-748 AND SER-849</scope>
    <scope>CHARACTERIZATION OF VARIANTS GLY-481; PRO-507; MET-562; ARG-570; GLN-650; SER-659; PRO-705; GLY-748 AND SER-849</scope>
    <scope>ACTIVITY REGULATION</scope>
</reference>
<reference key="33">
    <citation type="journal article" date="2011" name="J. Biol. Chem.">
        <title>The Casitas B lineage lymphoma (Cbl) mutant G306E enhances osteogenic differentiation in human mesenchymal stromal cells in part by decreased Cbl-mediated platelet-derived growth factor receptor alpha and fibroblast growth factor receptor 2 ubiquitination.</title>
        <authorList>
            <person name="Severe N."/>
            <person name="Miraoui H."/>
            <person name="Marie P.J."/>
        </authorList>
    </citation>
    <scope>FUNCTION IN CELL DIFFERENTIATION</scope>
    <scope>UBIQUITINATION</scope>
</reference>
<reference key="34">
    <citation type="journal article" date="2011" name="Oncogene">
        <title>The low frequency of clinical resistance to PDGFR inhibitors in myeloid neoplasms with abnormalities of PDGFRA might be related to the limited repertoire of possible PDGFRA kinase domain mutations in vitro.</title>
        <authorList>
            <person name="von Bubnoff N."/>
            <person name="Gorantla S.P."/>
            <person name="Engh R.A."/>
            <person name="Oliveira T.M."/>
            <person name="Thone S."/>
            <person name="Aberg E."/>
            <person name="Peschel C."/>
            <person name="Duyster J."/>
        </authorList>
    </citation>
    <scope>ROLE IN DISEASE</scope>
    <scope>CHARACTERIZATION OF VARIANT VAL-842</scope>
    <scope>ACTIVITY REGULATION</scope>
</reference>
<reference key="35">
    <citation type="journal article" date="1998" name="Biochim. Biophys. Acta">
        <title>Signal transduction via platelet-derived growth factor receptors.</title>
        <authorList>
            <person name="Heldin C.H."/>
            <person name="Ostman A."/>
            <person name="Ronnstrand L."/>
        </authorList>
    </citation>
    <scope>REVIEW ON SIGNALING AND AUTOPHOSPHORYLATION</scope>
</reference>
<reference key="36">
    <citation type="journal article" date="2004" name="Cytokine Growth Factor Rev.">
        <title>PDGF receptors-mediators of autocrine tumor growth and regulators of tumor vasculature and stroma.</title>
        <authorList>
            <person name="Ostman A."/>
        </authorList>
    </citation>
    <scope>REVIEW ON ROLE IN DISEASE AND ACTIVITY REGULATION</scope>
</reference>
<reference key="37">
    <citation type="journal article" date="2007" name="Adv. Cancer Res.">
        <title>PDGF receptors as targets in tumor treatment.</title>
        <authorList>
            <person name="Ostman A."/>
            <person name="Heldin C.H."/>
        </authorList>
    </citation>
    <scope>REVIEW ON ROLE IN DISEASE AND ACTIVITY REGULATION</scope>
</reference>
<reference key="38">
    <citation type="journal article" date="2008" name="Genes Dev.">
        <title>Role of platelet-derived growth factors in physiology and medicine.</title>
        <authorList>
            <person name="Andrae J."/>
            <person name="Gallini R."/>
            <person name="Betsholtz C."/>
        </authorList>
    </citation>
    <scope>REVIEW ON FUNCTION IN DEVELOPMENT AND DISEASE; LIGANDS AND SIGNALING PATHWAYS</scope>
</reference>
<reference key="39">
    <citation type="journal article" date="2017" name="PLoS Pathog.">
        <title>Human cytomegalovirus glycoprotein complex gH/gL/gO uses PDGFR-alpha as a key for entry.</title>
        <authorList>
            <person name="Wu Y."/>
            <person name="Prager A."/>
            <person name="Boos S."/>
            <person name="Resch M."/>
            <person name="Brizic I."/>
            <person name="Mach M."/>
            <person name="Wildner S."/>
            <person name="Scrivano L."/>
            <person name="Adler B."/>
        </authorList>
    </citation>
    <scope>INTERACTION WITH HUMAN CYTOMEGALOVIRUS PROTEINS GH; GL AND GO (MICROBIAL INFECTION)</scope>
</reference>
<reference key="40">
    <citation type="journal article" date="2002" name="J. Biol. Chem.">
        <title>Structural determinants of the Na+/H+ exchanger regulatory factor interaction with the beta 2 adrenergic and platelet-derived growth factor receptors.</title>
        <authorList>
            <person name="Karthikeyan S."/>
            <person name="Leung T."/>
            <person name="Ladias J.A.A."/>
        </authorList>
    </citation>
    <scope>X-RAY CRYSTALLOGRAPHY (2.2 ANGSTROMS) OF 1185-1189 IN COMPLEX WITH NHERF1 AND PDGFRB</scope>
</reference>
<reference evidence="49" key="41">
    <citation type="journal article" date="2021" name="Cell">
        <title>Structures of HCMV Trimer reveal the basis for receptor recognition and cell entry.</title>
        <authorList>
            <person name="Kschonsak M."/>
            <person name="Rouge L."/>
            <person name="Arthur C.P."/>
            <person name="Hoangdung H."/>
            <person name="Patel N."/>
            <person name="Kim I."/>
            <person name="Johnson M.C."/>
            <person name="Kraft E."/>
            <person name="Rohou A.L."/>
            <person name="Gill A."/>
            <person name="Martinez-Martin N."/>
            <person name="Payandeh J."/>
            <person name="Ciferri C."/>
        </authorList>
    </citation>
    <scope>STRUCTURE BY ELECTRON MICROSCOPY (2.80 ANGSTROMS) OF 1-524</scope>
    <scope>INTERACTION WITH HUMAN CYTOMEGALOVIRUS PROTEINS GH; GL AND GO (MICROBIAL INFECTION)</scope>
</reference>
<reference key="42">
    <citation type="journal article" date="2004" name="Gastroenterology">
        <title>PDGFRA germline mutation in a family with multiple cases of gastrointestinal stromal tumor.</title>
        <authorList>
            <person name="Chompret A."/>
            <person name="Kannengiesser C."/>
            <person name="Barrois M."/>
            <person name="Terrier P."/>
            <person name="Dahan P."/>
            <person name="Tursz T."/>
            <person name="Lenoir G.M."/>
            <person name="Bressac-De Paillerets B."/>
        </authorList>
    </citation>
    <scope>INVOLVEMENT IN GISTPS</scope>
    <scope>VARIANT GISTPS TYR-846</scope>
</reference>
<reference key="43">
    <citation type="journal article" date="2006" name="Gastroenterology">
        <title>Intestinal neurofibromatosis is a subtype of familial GIST and results from a dominant activating mutation in PDGFRA.</title>
        <authorList>
            <person name="de Raedt T."/>
            <person name="Cools J."/>
            <person name="Debiec-Rychter M."/>
            <person name="Brems H."/>
            <person name="Mentens N."/>
            <person name="Sciot R."/>
            <person name="Himpens J."/>
            <person name="de Wever I."/>
            <person name="Schoeffski P."/>
            <person name="Marynen P."/>
            <person name="Legius E."/>
        </authorList>
    </citation>
    <scope>VARIANT GISTPS CYS-555</scope>
    <scope>CHARACTERIZATION OF VARIANT GISTPS CYS-555</scope>
    <scope>FUNCTION</scope>
</reference>
<reference key="44">
    <citation type="journal article" date="2007" name="Nature">
        <title>Patterns of somatic mutation in human cancer genomes.</title>
        <authorList>
            <person name="Greenman C."/>
            <person name="Stephens P."/>
            <person name="Smith R."/>
            <person name="Dalgliesh G.L."/>
            <person name="Hunter C."/>
            <person name="Bignell G."/>
            <person name="Davies H."/>
            <person name="Teague J."/>
            <person name="Butler A."/>
            <person name="Stevens C."/>
            <person name="Edkins S."/>
            <person name="O'Meara S."/>
            <person name="Vastrik I."/>
            <person name="Schmidt E.E."/>
            <person name="Avis T."/>
            <person name="Barthorpe S."/>
            <person name="Bhamra G."/>
            <person name="Buck G."/>
            <person name="Choudhury B."/>
            <person name="Clements J."/>
            <person name="Cole J."/>
            <person name="Dicks E."/>
            <person name="Forbes S."/>
            <person name="Gray K."/>
            <person name="Halliday K."/>
            <person name="Harrison R."/>
            <person name="Hills K."/>
            <person name="Hinton J."/>
            <person name="Jenkinson A."/>
            <person name="Jones D."/>
            <person name="Menzies A."/>
            <person name="Mironenko T."/>
            <person name="Perry J."/>
            <person name="Raine K."/>
            <person name="Richardson D."/>
            <person name="Shepherd R."/>
            <person name="Small A."/>
            <person name="Tofts C."/>
            <person name="Varian J."/>
            <person name="Webb T."/>
            <person name="West S."/>
            <person name="Widaa S."/>
            <person name="Yates A."/>
            <person name="Cahill D.P."/>
            <person name="Louis D.N."/>
            <person name="Goldstraw P."/>
            <person name="Nicholson A.G."/>
            <person name="Brasseur F."/>
            <person name="Looijenga L."/>
            <person name="Weber B.L."/>
            <person name="Chiew Y.-E."/>
            <person name="DeFazio A."/>
            <person name="Greaves M.F."/>
            <person name="Green A.R."/>
            <person name="Campbell P."/>
            <person name="Birney E."/>
            <person name="Easton D.F."/>
            <person name="Chenevix-Trench G."/>
            <person name="Tan M.-H."/>
            <person name="Khoo S.K."/>
            <person name="Teh B.T."/>
            <person name="Yuen S.T."/>
            <person name="Leung S.Y."/>
            <person name="Wooster R."/>
            <person name="Futreal P.A."/>
            <person name="Stratton M.R."/>
        </authorList>
    </citation>
    <scope>VARIANTS [LARGE SCALE ANALYSIS] ASP-79; ASP-426; PRO-478; CYS-764; ARG-829; LYS-996 AND ASN-1071</scope>
</reference>
<reference key="45">
    <citation type="journal article" date="2015" name="Mod. Pathol.">
        <title>PDGFRA-mutant syndrome.</title>
        <authorList>
            <person name="Ricci R."/>
            <person name="Martini M."/>
            <person name="Cenci T."/>
            <person name="Carbone A."/>
            <person name="Lanza P."/>
            <person name="Biondi A."/>
            <person name="Rindi G."/>
            <person name="Cassano A."/>
            <person name="Larghi A."/>
            <person name="Persiani R."/>
            <person name="Larocca L.M."/>
        </authorList>
    </citation>
    <scope>VARIANT GISTPS LEU-653</scope>
</reference>
<comment type="function">
    <text evidence="9 10 12 14 21 22 23 24 28 29 30 34 41 43 45">Tyrosine-protein kinase that acts as a cell-surface receptor for PDGFA, PDGFB and PDGFC and plays an essential role in the regulation of embryonic development, cell proliferation, survival and chemotaxis. Depending on the context, promotes or inhibits cell proliferation and cell migration. Plays an important role in the differentiation of bone marrow-derived mesenchymal stem cells. Required for normal skeleton development and cephalic closure during embryonic development. Required for normal development of the mucosa lining the gastrointestinal tract, and for recruitment of mesenchymal cells and normal development of intestinal villi. Plays a role in cell migration and chemotaxis in wound healing. Plays a role in platelet activation, secretion of agonists from platelet granules, and in thrombin-induced platelet aggregation. Binding of its cognate ligands - homodimeric PDGFA, homodimeric PDGFB, heterodimers formed by PDGFA and PDGFB or homodimeric PDGFC -leads to the activation of several signaling cascades; the response depends on the nature of the bound ligand and is modulated by the formation of heterodimers between PDGFRA and PDGFRB. Phosphorylates PIK3R1, PLCG1, and PTPN11. Activation of PLCG1 leads to the production of the cellular signaling molecules diacylglycerol and inositol 1,4,5-trisphosphate, mobilization of cytosolic Ca(2+) and the activation of protein kinase C. Phosphorylates PIK3R1, the regulatory subunit of phosphatidylinositol 3-kinase, and thereby mediates activation of the AKT1 signaling pathway. Mediates activation of HRAS and of the MAP kinases MAPK1/ERK2 and/or MAPK3/ERK1. Promotes activation of STAT family members STAT1, STAT3 and STAT5A and/or STAT5B. Receptor signaling is down-regulated by protein phosphatases that dephosphorylate the receptor and its down-stream effectors, and by rapid internalization of the activated receptor.</text>
</comment>
<comment type="catalytic activity">
    <reaction evidence="6">
        <text>L-tyrosyl-[protein] + ATP = O-phospho-L-tyrosyl-[protein] + ADP + H(+)</text>
        <dbReference type="Rhea" id="RHEA:10596"/>
        <dbReference type="Rhea" id="RHEA-COMP:10136"/>
        <dbReference type="Rhea" id="RHEA-COMP:20101"/>
        <dbReference type="ChEBI" id="CHEBI:15378"/>
        <dbReference type="ChEBI" id="CHEBI:30616"/>
        <dbReference type="ChEBI" id="CHEBI:46858"/>
        <dbReference type="ChEBI" id="CHEBI:61978"/>
        <dbReference type="ChEBI" id="CHEBI:456216"/>
        <dbReference type="EC" id="2.7.10.1"/>
    </reaction>
</comment>
<comment type="activity regulation">
    <text evidence="20 28 29">Present in an inactive conformation in the absence of bound ligand. Binding of PDGFA and/or PDGFB leads to dimerization and activation by autophosphorylation on tyrosine residues. Inhibited by imatinib, nilotinib and sorafenib.</text>
</comment>
<comment type="subunit">
    <text evidence="2 8 11 12 13 16 21 23 31 32 33 38 39 44 45">Interacts with homodimeric PDGFA, PDGFB and PDGFC, and with heterodimers formed by PDGFA and PDGFB. Monomer in the absence of bound ligand. Interaction with dimeric PDGFA, PDGFB and/or PDGFC leads to receptor dimerization, where both PDGFRA homodimers and heterodimers with PDGFRB are observed. Interacts (tyrosine phosphorylated) with SHB (via SH2 domain) (By similarity). Interacts (tyrosine phosphorylated) with SHF (via SH2 domain). Interacts (tyrosine phosphorylated) with SRC (via SH2 domain). Interacts (tyrosine phosphorylated) with PIK3R1. Interacts (tyrosine phosphorylated) with PLCG1 (via SH2 domain). Interacts (tyrosine phosphorylated) with CRK, GRB2 and GRB7. Interacts with CD248; this interaction promotes PDGF receptor signaling pathway (By similarity).</text>
</comment>
<comment type="subunit">
    <text evidence="27 36 37">(Microbial infection) Interacts with human cytomegalovirus/HHV-5 envelope glycoprotein B/gB. Also interacts with the trimeric complex gH-gL-gO. Trimer-PDGFRA interaction has an inhibitory effect on PDGFRA signaling (PubMed:33626330).</text>
</comment>
<comment type="interaction">
    <interactant intactId="EBI-2861522">
        <id>P16234</id>
    </interactant>
    <interactant intactId="EBI-886">
        <id>P46108</id>
        <label>CRK</label>
    </interactant>
    <organismsDiffer>false</organismsDiffer>
    <experiments>4</experiments>
</comment>
<comment type="interaction">
    <interactant intactId="EBI-2861522">
        <id>P16234</id>
    </interactant>
    <interactant intactId="EBI-910">
        <id>P46109</id>
        <label>CRKL</label>
    </interactant>
    <organismsDiffer>false</organismsDiffer>
    <experiments>3</experiments>
</comment>
<comment type="interaction">
    <interactant intactId="EBI-2861522">
        <id>P16234</id>
    </interactant>
    <interactant intactId="EBI-297353">
        <id>P00533</id>
        <label>EGFR</label>
    </interactant>
    <organismsDiffer>false</organismsDiffer>
    <experiments>4</experiments>
</comment>
<comment type="interaction">
    <interactant intactId="EBI-2861522">
        <id>P16234</id>
    </interactant>
    <interactant intactId="EBI-749265">
        <id>Q8N6L0</id>
        <label>KASH5</label>
    </interactant>
    <organismsDiffer>false</organismsDiffer>
    <experiments>3</experiments>
</comment>
<comment type="interaction">
    <interactant intactId="EBI-2861522">
        <id>P16234</id>
    </interactant>
    <interactant intactId="EBI-2881386">
        <id>P04085</id>
        <label>PDGFA</label>
    </interactant>
    <organismsDiffer>false</organismsDiffer>
    <experiments>6</experiments>
</comment>
<comment type="interaction">
    <interactant intactId="EBI-2861522">
        <id>P16234</id>
    </interactant>
    <interactant intactId="EBI-1554925">
        <id>P01127</id>
        <label>PDGFB</label>
    </interactant>
    <organismsDiffer>false</organismsDiffer>
    <experiments>11</experiments>
</comment>
<comment type="interaction">
    <interactant intactId="EBI-2861522">
        <id>P16234</id>
    </interactant>
    <interactant intactId="EBI-8833587">
        <id>Q9NRA1</id>
        <label>PDGFC</label>
    </interactant>
    <organismsDiffer>false</organismsDiffer>
    <experiments>3</experiments>
</comment>
<comment type="interaction">
    <interactant intactId="EBI-2861522">
        <id>P16234</id>
    </interactant>
    <interactant intactId="EBI-476295">
        <id>P31947</id>
        <label>SFN</label>
    </interactant>
    <organismsDiffer>false</organismsDiffer>
    <experiments>2</experiments>
</comment>
<comment type="interaction">
    <interactant intactId="EBI-2861522">
        <id>P16234</id>
    </interactant>
    <interactant intactId="EBI-356498">
        <id>P62258</id>
        <label>YWHAE</label>
    </interactant>
    <organismsDiffer>false</organismsDiffer>
    <experiments>2</experiments>
</comment>
<comment type="interaction">
    <interactant intactId="EBI-15499330">
        <id>P16234-1</id>
    </interactant>
    <interactant intactId="EBI-15499301">
        <id>Q9NRA1-1</id>
        <label>PDGFC</label>
    </interactant>
    <organismsDiffer>false</organismsDiffer>
    <experiments>2</experiments>
</comment>
<comment type="interaction">
    <interactant intactId="EBI-15499330">
        <id>P16234-1</id>
    </interactant>
    <interactant intactId="EBI-15722055">
        <id>A8T7D5</id>
        <label>UL55</label>
    </interactant>
    <organismsDiffer>true</organismsDiffer>
    <experiments>2</experiments>
</comment>
<comment type="interaction">
    <interactant intactId="EBI-13380852">
        <id>P16234-2</id>
    </interactant>
    <interactant intactId="EBI-77613">
        <id>P05067</id>
        <label>APP</label>
    </interactant>
    <organismsDiffer>false</organismsDiffer>
    <experiments>3</experiments>
</comment>
<comment type="interaction">
    <interactant intactId="EBI-13380852">
        <id>P16234-2</id>
    </interactant>
    <interactant intactId="EBI-11721828">
        <id>Q8IY26</id>
        <label>PLPP6</label>
    </interactant>
    <organismsDiffer>false</organismsDiffer>
    <experiments>3</experiments>
</comment>
<comment type="subcellular location">
    <subcellularLocation>
        <location evidence="16 34 41">Cell membrane</location>
        <topology evidence="16 34 41">Single-pass type I membrane protein</topology>
    </subcellularLocation>
    <subcellularLocation>
        <location evidence="2">Cell projection</location>
        <location evidence="2">Cilium</location>
    </subcellularLocation>
    <subcellularLocation>
        <location evidence="2">Golgi apparatus</location>
    </subcellularLocation>
</comment>
<comment type="alternative products">
    <event type="alternative splicing"/>
    <isoform>
        <id>P16234-1</id>
        <name>1</name>
        <sequence type="displayed"/>
    </isoform>
    <isoform>
        <id>P16234-2</id>
        <name>2</name>
        <sequence type="described" ref="VSP_007833 VSP_007834"/>
    </isoform>
    <isoform>
        <id>P16234-3</id>
        <name>3</name>
        <sequence type="described" ref="VSP_042015 VSP_042016"/>
    </isoform>
</comment>
<comment type="tissue specificity">
    <text evidence="32 40 41">Detected in platelets (at protein level). Widely expressed. Detected in brain, fibroblasts, smooth muscle, heart, and embryo. Expressed in primary and metastatic colon tumors and in normal colon tissue.</text>
</comment>
<comment type="PTM">
    <text>N-glycosylated.</text>
</comment>
<comment type="PTM">
    <text evidence="48">Ubiquitinated, leading to its internalization and degradation.</text>
</comment>
<comment type="PTM">
    <text evidence="8 9 11 21 38 45">Autophosphorylated on tyrosine residues upon ligand binding. Autophosphorylation occurs in trans, i.e. one subunit of the dimeric receptor phosphorylates tyrosine residues on the other subunit. Phosphorylation at Tyr-731 and Tyr-742 is important for interaction with PIK3R1. Phosphorylation at Tyr-720 and Tyr-754 is important for interaction with PTPN11. Phosphorylation at Tyr-762 is important for interaction with CRK. Phosphorylation at Tyr-572 and Tyr-574 is important for interaction with SRC and SRC family members. Phosphorylation at Tyr-988 and Tyr-1018 is important for interaction with PLCG1.</text>
</comment>
<comment type="disease">
    <text evidence="15">A chromosomal aberration involving PDGFRA is found in some cases of hypereosinophilic syndrome. Interstitial chromosomal deletion del(4)(q12q12) causes the fusion of FIP1L1 and PDGFRA (FIP1L1-PDGFRA). Mutations that cause overexpression and/or constitutive activation of PDGFRA may be a cause of hypereosinophilic syndrome.</text>
</comment>
<comment type="disease" evidence="14 20">
    <disease id="DI-01646">
        <name>Gastrointestinal stromal tumor</name>
        <acronym>GIST</acronym>
        <description>Common mesenchymal neoplasms arising in the gastrointestinal tract, most often in the stomach. They are histologically, immunohistochemically, and genetically different from typical leiomyomas, leiomyosarcomas, and schwannomas. Most GISTs are composed of a fairly uniform population of spindle-shaped cells. Some tumors are dominated by epithelioid cells or contain a mixture of spindle and epithelioid morphologies. Primary GISTs in the gastrointestinal tract commonly metastasize in the omentum and mesenteries, often as multiple nodules. However, primary tumors may also occur outside of the gastrointestinal tract, in other intra-abdominal locations, especially in the omentum and mesentery.</description>
        <dbReference type="MIM" id="606764"/>
    </disease>
    <text evidence="14">The gene represented in this entry may be involved in disease pathogenesis. Mutations causing PDGFRA constitutive activation have been found in gastrointestinal stromal tumors lacking KIT mutations (PubMed:12522257).</text>
</comment>
<comment type="disease" evidence="17 22 35">
    <disease id="DI-05623">
        <name>GIST-plus syndrome</name>
        <acronym>GISTPS</acronym>
        <description>A disorder characterized by multiple mesenchymal tumors of the gastrointestinal tract, including gastrointestinal stromal tumor, inflammatory fibroid polyps, and fibroid tumors. Additional features are coarse facies and skin, broad hands and feet, and premature tooth loss. GISTPS is an autosomal dominant disease with incomplete penetrance. Gastrointestinal stromal tumor and inflammatory fibroid polyps may also occur in isolation.</description>
        <dbReference type="MIM" id="175510"/>
    </disease>
    <text>The disease is caused by variants affecting the gene represented in this entry.</text>
</comment>
<comment type="similarity">
    <text evidence="5">Belongs to the protein kinase superfamily. Tyr protein kinase family. CSF-1/PDGF receptor subfamily.</text>
</comment>
<comment type="sequence caution" evidence="47">
    <conflict type="erroneous initiation">
        <sequence resource="EMBL-CDS" id="AAP69563"/>
    </conflict>
    <text>Extended N-terminus.</text>
</comment>
<evidence type="ECO:0000250" key="1"/>
<evidence type="ECO:0000250" key="2">
    <source>
        <dbReference type="UniProtKB" id="P26618"/>
    </source>
</evidence>
<evidence type="ECO:0000255" key="3"/>
<evidence type="ECO:0000255" key="4">
    <source>
        <dbReference type="PROSITE-ProRule" id="PRU00114"/>
    </source>
</evidence>
<evidence type="ECO:0000255" key="5">
    <source>
        <dbReference type="PROSITE-ProRule" id="PRU00159"/>
    </source>
</evidence>
<evidence type="ECO:0000255" key="6">
    <source>
        <dbReference type="PROSITE-ProRule" id="PRU10028"/>
    </source>
</evidence>
<evidence type="ECO:0000256" key="7">
    <source>
        <dbReference type="SAM" id="MobiDB-lite"/>
    </source>
</evidence>
<evidence type="ECO:0000269" key="8">
    <source>
    </source>
</evidence>
<evidence type="ECO:0000269" key="9">
    <source>
    </source>
</evidence>
<evidence type="ECO:0000269" key="10">
    <source>
    </source>
</evidence>
<evidence type="ECO:0000269" key="11">
    <source>
    </source>
</evidence>
<evidence type="ECO:0000269" key="12">
    <source>
    </source>
</evidence>
<evidence type="ECO:0000269" key="13">
    <source>
    </source>
</evidence>
<evidence type="ECO:0000269" key="14">
    <source>
    </source>
</evidence>
<evidence type="ECO:0000269" key="15">
    <source>
    </source>
</evidence>
<evidence type="ECO:0000269" key="16">
    <source>
    </source>
</evidence>
<evidence type="ECO:0000269" key="17">
    <source>
    </source>
</evidence>
<evidence type="ECO:0000269" key="18">
    <source>
    </source>
</evidence>
<evidence type="ECO:0000269" key="19">
    <source>
    </source>
</evidence>
<evidence type="ECO:0000269" key="20">
    <source>
    </source>
</evidence>
<evidence type="ECO:0000269" key="21">
    <source>
    </source>
</evidence>
<evidence type="ECO:0000269" key="22">
    <source>
    </source>
</evidence>
<evidence type="ECO:0000269" key="23">
    <source>
    </source>
</evidence>
<evidence type="ECO:0000269" key="24">
    <source>
    </source>
</evidence>
<evidence type="ECO:0000269" key="25">
    <source>
    </source>
</evidence>
<evidence type="ECO:0000269" key="26">
    <source>
    </source>
</evidence>
<evidence type="ECO:0000269" key="27">
    <source>
    </source>
</evidence>
<evidence type="ECO:0000269" key="28">
    <source>
    </source>
</evidence>
<evidence type="ECO:0000269" key="29">
    <source>
    </source>
</evidence>
<evidence type="ECO:0000269" key="30">
    <source>
    </source>
</evidence>
<evidence type="ECO:0000269" key="31">
    <source>
    </source>
</evidence>
<evidence type="ECO:0000269" key="32">
    <source>
    </source>
</evidence>
<evidence type="ECO:0000269" key="33">
    <source>
    </source>
</evidence>
<evidence type="ECO:0000269" key="34">
    <source>
    </source>
</evidence>
<evidence type="ECO:0000269" key="35">
    <source>
    </source>
</evidence>
<evidence type="ECO:0000269" key="36">
    <source>
    </source>
</evidence>
<evidence type="ECO:0000269" key="37">
    <source>
    </source>
</evidence>
<evidence type="ECO:0000269" key="38">
    <source>
    </source>
</evidence>
<evidence type="ECO:0000269" key="39">
    <source>
    </source>
</evidence>
<evidence type="ECO:0000269" key="40">
    <source>
    </source>
</evidence>
<evidence type="ECO:0000269" key="41">
    <source>
    </source>
</evidence>
<evidence type="ECO:0000269" key="42">
    <source>
    </source>
</evidence>
<evidence type="ECO:0000269" key="43">
    <source>
    </source>
</evidence>
<evidence type="ECO:0000269" key="44">
    <source>
    </source>
</evidence>
<evidence type="ECO:0000269" key="45">
    <source>
    </source>
</evidence>
<evidence type="ECO:0000303" key="46">
    <source>
    </source>
</evidence>
<evidence type="ECO:0000305" key="47"/>
<evidence type="ECO:0000305" key="48">
    <source>
    </source>
</evidence>
<evidence type="ECO:0007744" key="49">
    <source>
        <dbReference type="PDB" id="7LBF"/>
    </source>
</evidence>
<evidence type="ECO:0007829" key="50">
    <source>
        <dbReference type="PDB" id="5GRN"/>
    </source>
</evidence>
<evidence type="ECO:0007829" key="51">
    <source>
        <dbReference type="PDB" id="6A32"/>
    </source>
</evidence>
<evidence type="ECO:0007829" key="52">
    <source>
        <dbReference type="PDB" id="6JOJ"/>
    </source>
</evidence>
<evidence type="ECO:0007829" key="53">
    <source>
        <dbReference type="PDB" id="7LBF"/>
    </source>
</evidence>
<evidence type="ECO:0007829" key="54">
    <source>
        <dbReference type="PDB" id="7RAM"/>
    </source>
</evidence>
<evidence type="ECO:0007829" key="55">
    <source>
        <dbReference type="PDB" id="8PQJ"/>
    </source>
</evidence>
<gene>
    <name type="primary">PDGFRA</name>
    <name type="synonym">PDGFR2</name>
    <name type="synonym">RHEPDGFRA</name>
</gene>
<dbReference type="EC" id="2.7.10.1"/>
<dbReference type="EMBL" id="M22734">
    <property type="protein sequence ID" value="AAA60048.1"/>
    <property type="molecule type" value="mRNA"/>
</dbReference>
<dbReference type="EMBL" id="M21574">
    <property type="protein sequence ID" value="AAA96715.1"/>
    <property type="molecule type" value="mRNA"/>
</dbReference>
<dbReference type="EMBL" id="D50017">
    <property type="protein sequence ID" value="BAA08742.1"/>
    <property type="molecule type" value="Genomic_DNA"/>
</dbReference>
<dbReference type="EMBL" id="AK316578">
    <property type="protein sequence ID" value="BAG38166.1"/>
    <property type="molecule type" value="mRNA"/>
</dbReference>
<dbReference type="EMBL" id="AC098587">
    <property type="status" value="NOT_ANNOTATED_CDS"/>
    <property type="molecule type" value="Genomic_DNA"/>
</dbReference>
<dbReference type="EMBL" id="AC138779">
    <property type="status" value="NOT_ANNOTATED_CDS"/>
    <property type="molecule type" value="Genomic_DNA"/>
</dbReference>
<dbReference type="EMBL" id="BC015186">
    <property type="protein sequence ID" value="AAH15186.1"/>
    <property type="molecule type" value="mRNA"/>
</dbReference>
<dbReference type="EMBL" id="BC063414">
    <property type="protein sequence ID" value="AAH63414.1"/>
    <property type="molecule type" value="mRNA"/>
</dbReference>
<dbReference type="EMBL" id="AY229892">
    <property type="protein sequence ID" value="AAP69563.1"/>
    <property type="status" value="ALT_INIT"/>
    <property type="molecule type" value="mRNA"/>
</dbReference>
<dbReference type="CCDS" id="CCDS3495.1">
    <molecule id="P16234-1"/>
</dbReference>
<dbReference type="PIR" id="A40162">
    <property type="entry name" value="PFHUGA"/>
</dbReference>
<dbReference type="RefSeq" id="NP_001334758.1">
    <molecule id="P16234-1"/>
    <property type="nucleotide sequence ID" value="NM_001347829.2"/>
</dbReference>
<dbReference type="RefSeq" id="NP_006197.1">
    <molecule id="P16234-1"/>
    <property type="nucleotide sequence ID" value="NM_006206.6"/>
</dbReference>
<dbReference type="RefSeq" id="XP_005265800.1">
    <molecule id="P16234-1"/>
    <property type="nucleotide sequence ID" value="XM_005265743.2"/>
</dbReference>
<dbReference type="RefSeq" id="XP_047271722.1">
    <molecule id="P16234-1"/>
    <property type="nucleotide sequence ID" value="XM_047415766.1"/>
</dbReference>
<dbReference type="RefSeq" id="XP_047271723.1">
    <molecule id="P16234-1"/>
    <property type="nucleotide sequence ID" value="XM_047415767.1"/>
</dbReference>
<dbReference type="RefSeq" id="XP_054206134.1">
    <molecule id="P16234-1"/>
    <property type="nucleotide sequence ID" value="XM_054350159.1"/>
</dbReference>
<dbReference type="PDB" id="1GQ5">
    <property type="method" value="X-ray"/>
    <property type="resolution" value="2.20 A"/>
</dbReference>
<dbReference type="PDB" id="5GRN">
    <property type="method" value="X-ray"/>
    <property type="resolution" value="1.77 A"/>
    <property type="chains" value="A=550-973"/>
</dbReference>
<dbReference type="PDB" id="5K5X">
    <property type="method" value="X-ray"/>
    <property type="resolution" value="2.17 A"/>
    <property type="chains" value="A=550-973"/>
</dbReference>
<dbReference type="PDB" id="6A32">
    <property type="method" value="X-ray"/>
    <property type="resolution" value="1.87 A"/>
    <property type="chains" value="A=550-973"/>
</dbReference>
<dbReference type="PDB" id="6JOI">
    <property type="method" value="X-ray"/>
    <property type="resolution" value="3.10 A"/>
    <property type="chains" value="A=550-973"/>
</dbReference>
<dbReference type="PDB" id="6JOJ">
    <property type="method" value="X-ray"/>
    <property type="resolution" value="2.60 A"/>
    <property type="chains" value="A=550-973"/>
</dbReference>
<dbReference type="PDB" id="6JOK">
    <property type="method" value="X-ray"/>
    <property type="resolution" value="3.80 A"/>
    <property type="chains" value="A=550-973"/>
</dbReference>
<dbReference type="PDB" id="6JOL">
    <property type="method" value="X-ray"/>
    <property type="resolution" value="1.90 A"/>
    <property type="chains" value="A=550-973"/>
</dbReference>
<dbReference type="PDB" id="7LBF">
    <property type="method" value="EM"/>
    <property type="resolution" value="2.80 A"/>
    <property type="chains" value="D=1-524"/>
</dbReference>
<dbReference type="PDB" id="7RAM">
    <property type="method" value="EM"/>
    <property type="resolution" value="3.43 A"/>
    <property type="chains" value="D=1-524"/>
</dbReference>
<dbReference type="PDB" id="8PQH">
    <property type="method" value="X-ray"/>
    <property type="resolution" value="2.50 A"/>
    <property type="chains" value="A=550-973"/>
</dbReference>
<dbReference type="PDB" id="8PQI">
    <property type="method" value="X-ray"/>
    <property type="resolution" value="2.60 A"/>
    <property type="chains" value="A=550-973"/>
</dbReference>
<dbReference type="PDB" id="8PQJ">
    <property type="method" value="X-ray"/>
    <property type="resolution" value="1.82 A"/>
    <property type="chains" value="A=550-973"/>
</dbReference>
<dbReference type="PDB" id="8PQK">
    <property type="method" value="X-ray"/>
    <property type="resolution" value="2.00 A"/>
    <property type="chains" value="A=550-973"/>
</dbReference>
<dbReference type="PDB" id="9GZH">
    <property type="method" value="X-ray"/>
    <property type="resolution" value="2.20 A"/>
    <property type="chains" value="A=550-973"/>
</dbReference>
<dbReference type="PDBsum" id="1GQ5"/>
<dbReference type="PDBsum" id="5GRN"/>
<dbReference type="PDBsum" id="5K5X"/>
<dbReference type="PDBsum" id="6A32"/>
<dbReference type="PDBsum" id="6JOI"/>
<dbReference type="PDBsum" id="6JOJ"/>
<dbReference type="PDBsum" id="6JOK"/>
<dbReference type="PDBsum" id="6JOL"/>
<dbReference type="PDBsum" id="7LBF"/>
<dbReference type="PDBsum" id="7RAM"/>
<dbReference type="PDBsum" id="8PQH"/>
<dbReference type="PDBsum" id="8PQI"/>
<dbReference type="PDBsum" id="8PQJ"/>
<dbReference type="PDBsum" id="8PQK"/>
<dbReference type="PDBsum" id="9GZH"/>
<dbReference type="EMDB" id="EMD-23253"/>
<dbReference type="EMDB" id="EMD-24369"/>
<dbReference type="SMR" id="P16234"/>
<dbReference type="BioGRID" id="111182">
    <property type="interactions" value="390"/>
</dbReference>
<dbReference type="ComplexPortal" id="CPX-2881">
    <property type="entry name" value="PDGF receptor alpha - PDGF-AA complex"/>
</dbReference>
<dbReference type="ComplexPortal" id="CPX-2883">
    <property type="entry name" value="PDGF receptor alpha-beta - PDGF-BB complex"/>
</dbReference>
<dbReference type="ComplexPortal" id="CPX-2884">
    <property type="entry name" value="PDGF receptor alpha - PDGF-BB complex"/>
</dbReference>
<dbReference type="ComplexPortal" id="CPX-2885">
    <property type="entry name" value="PDGF receptor alpha - PDGF-AB complex"/>
</dbReference>
<dbReference type="ComplexPortal" id="CPX-2887">
    <property type="entry name" value="PDGF receptor alpha - PDGF-CC complex"/>
</dbReference>
<dbReference type="ComplexPortal" id="CPX-2888">
    <property type="entry name" value="PDGF receptor alpha-beta - PDGF-CC complex"/>
</dbReference>
<dbReference type="ComplexPortal" id="CPX-2890">
    <property type="entry name" value="PDGF receptor alpha-beta - PDGF-DD complex"/>
</dbReference>
<dbReference type="ComplexPortal" id="CPX-2892">
    <property type="entry name" value="PDGF receptor alpha-beta - PDGF-AB complex"/>
</dbReference>
<dbReference type="CORUM" id="P16234"/>
<dbReference type="DIP" id="DIP-5736N"/>
<dbReference type="FunCoup" id="P16234">
    <property type="interactions" value="1968"/>
</dbReference>
<dbReference type="IntAct" id="P16234">
    <property type="interactions" value="336"/>
</dbReference>
<dbReference type="MINT" id="P16234"/>
<dbReference type="STRING" id="9606.ENSP00000257290"/>
<dbReference type="BindingDB" id="P16234"/>
<dbReference type="ChEMBL" id="CHEMBL2007"/>
<dbReference type="DrugBank" id="DB14866">
    <property type="generic name" value="Amcasertib"/>
</dbReference>
<dbReference type="DrugBank" id="DB12742">
    <property type="generic name" value="Amuvatinib"/>
</dbReference>
<dbReference type="DrugBank" id="DB15233">
    <property type="generic name" value="Avapritinib"/>
</dbReference>
<dbReference type="DrugBank" id="DB00102">
    <property type="generic name" value="Becaplermin"/>
</dbReference>
<dbReference type="DrugBank" id="DB11832">
    <property type="generic name" value="Crenolanib"/>
</dbReference>
<dbReference type="DrugBank" id="DB12147">
    <property type="generic name" value="Erdafitinib"/>
</dbReference>
<dbReference type="DrugBank" id="DB11741">
    <property type="generic name" value="Famitinib"/>
</dbReference>
<dbReference type="DrugBank" id="DB10772">
    <property type="generic name" value="Foreskin keratinocyte (neonatal)"/>
</dbReference>
<dbReference type="DrugBank" id="DB12010">
    <property type="generic name" value="Fostamatinib"/>
</dbReference>
<dbReference type="DrugBank" id="DB00619">
    <property type="generic name" value="Imatinib"/>
</dbReference>
<dbReference type="DrugBank" id="DB09078">
    <property type="generic name" value="Lenvatinib"/>
</dbReference>
<dbReference type="DrugBank" id="DB11845">
    <property type="generic name" value="Lucitanib"/>
</dbReference>
<dbReference type="DrugBank" id="DB06595">
    <property type="generic name" value="Midostaurin"/>
</dbReference>
<dbReference type="DrugBank" id="DB09079">
    <property type="generic name" value="Nintedanib"/>
</dbReference>
<dbReference type="DrugBank" id="DB06043">
    <property type="generic name" value="Olaratumab"/>
</dbReference>
<dbReference type="DrugBank" id="DB06589">
    <property type="generic name" value="Pazopanib"/>
</dbReference>
<dbReference type="DrugBank" id="DB08339">
    <property type="generic name" value="PD-166326"/>
</dbReference>
<dbReference type="DrugBank" id="DB17041">
    <property type="generic name" value="PD-173952"/>
</dbReference>
<dbReference type="DrugBank" id="DB02567">
    <property type="generic name" value="PD173955"/>
</dbReference>
<dbReference type="DrugBank" id="DB08901">
    <property type="generic name" value="Ponatinib"/>
</dbReference>
<dbReference type="DrugBank" id="DB08052">
    <property type="generic name" value="PP-121"/>
</dbReference>
<dbReference type="DrugBank" id="DB08896">
    <property type="generic name" value="Regorafenib"/>
</dbReference>
<dbReference type="DrugBank" id="DB14840">
    <property type="generic name" value="Ripretinib"/>
</dbReference>
<dbReference type="DrugBank" id="DB06436">
    <property type="generic name" value="Semaxanib"/>
</dbReference>
<dbReference type="DrugBank" id="DB08009">
    <property type="generic name" value="SU-11652"/>
</dbReference>
<dbReference type="DrugBank" id="DB01268">
    <property type="generic name" value="Sunitinib"/>
</dbReference>
<dbReference type="DrugBank" id="DB11800">
    <property type="generic name" value="Tivozanib"/>
</dbReference>
<dbReference type="DrugBank" id="DB05146">
    <property type="generic name" value="XL820"/>
</dbReference>
<dbReference type="DrugCentral" id="P16234"/>
<dbReference type="GuidetoPHARMACOLOGY" id="1803"/>
<dbReference type="TCDB" id="8.A.23.1.66">
    <property type="family name" value="the basigin (basigin) family"/>
</dbReference>
<dbReference type="GlyCosmos" id="P16234">
    <property type="glycosylation" value="8 sites, No reported glycans"/>
</dbReference>
<dbReference type="GlyGen" id="P16234">
    <property type="glycosylation" value="9 sites, 3 N-linked glycans (2 sites), 1 O-linked glycan (1 site)"/>
</dbReference>
<dbReference type="iPTMnet" id="P16234"/>
<dbReference type="PhosphoSitePlus" id="P16234"/>
<dbReference type="BioMuta" id="PDGFRA"/>
<dbReference type="DMDM" id="129892"/>
<dbReference type="CPTAC" id="CPTAC-1767"/>
<dbReference type="CPTAC" id="CPTAC-3115"/>
<dbReference type="CPTAC" id="CPTAC-3116"/>
<dbReference type="jPOST" id="P16234"/>
<dbReference type="MassIVE" id="P16234"/>
<dbReference type="PaxDb" id="9606-ENSP00000257290"/>
<dbReference type="PeptideAtlas" id="P16234"/>
<dbReference type="ProteomicsDB" id="53328">
    <molecule id="P16234-1"/>
</dbReference>
<dbReference type="ProteomicsDB" id="53329">
    <molecule id="P16234-2"/>
</dbReference>
<dbReference type="ProteomicsDB" id="53330">
    <molecule id="P16234-3"/>
</dbReference>
<dbReference type="ABCD" id="P16234">
    <property type="antibodies" value="32 sequenced antibodies"/>
</dbReference>
<dbReference type="Antibodypedia" id="1381">
    <property type="antibodies" value="2283 antibodies from 47 providers"/>
</dbReference>
<dbReference type="DNASU" id="5156"/>
<dbReference type="Ensembl" id="ENST00000257290.10">
    <molecule id="P16234-1"/>
    <property type="protein sequence ID" value="ENSP00000257290.5"/>
    <property type="gene ID" value="ENSG00000134853.12"/>
</dbReference>
<dbReference type="Ensembl" id="ENST00000508170.5">
    <molecule id="P16234-2"/>
    <property type="protein sequence ID" value="ENSP00000425648.1"/>
    <property type="gene ID" value="ENSG00000134853.12"/>
</dbReference>
<dbReference type="Ensembl" id="ENST00000509490.5">
    <molecule id="P16234-3"/>
    <property type="protein sequence ID" value="ENSP00000424218.1"/>
    <property type="gene ID" value="ENSG00000134853.12"/>
</dbReference>
<dbReference type="GeneID" id="5156"/>
<dbReference type="KEGG" id="hsa:5156"/>
<dbReference type="MANE-Select" id="ENST00000257290.10">
    <property type="protein sequence ID" value="ENSP00000257290.5"/>
    <property type="RefSeq nucleotide sequence ID" value="NM_006206.6"/>
    <property type="RefSeq protein sequence ID" value="NP_006197.1"/>
</dbReference>
<dbReference type="UCSC" id="uc003hal.4">
    <molecule id="P16234-1"/>
    <property type="organism name" value="human"/>
</dbReference>
<dbReference type="AGR" id="HGNC:8803"/>
<dbReference type="CTD" id="5156"/>
<dbReference type="DisGeNET" id="5156"/>
<dbReference type="GeneCards" id="PDGFRA"/>
<dbReference type="HGNC" id="HGNC:8803">
    <property type="gene designation" value="PDGFRA"/>
</dbReference>
<dbReference type="HPA" id="ENSG00000134853">
    <property type="expression patterns" value="Tissue enhanced (ovary)"/>
</dbReference>
<dbReference type="MalaCards" id="PDGFRA"/>
<dbReference type="MIM" id="173490">
    <property type="type" value="gene"/>
</dbReference>
<dbReference type="MIM" id="175510">
    <property type="type" value="phenotype"/>
</dbReference>
<dbReference type="MIM" id="606764">
    <property type="type" value="phenotype"/>
</dbReference>
<dbReference type="MIM" id="607685">
    <property type="type" value="phenotype"/>
</dbReference>
<dbReference type="neXtProt" id="NX_P16234"/>
<dbReference type="OpenTargets" id="ENSG00000134853"/>
<dbReference type="Orphanet" id="585877">
    <property type="disease" value="B-lymphoblastic leukemia/lymphoma with recurrent genetic abnormality"/>
</dbReference>
<dbReference type="Orphanet" id="168940">
    <property type="disease" value="Chronic eosinophilic leukemia"/>
</dbReference>
<dbReference type="Orphanet" id="199306">
    <property type="disease" value="Cleft lip/palate"/>
</dbReference>
<dbReference type="Orphanet" id="44890">
    <property type="disease" value="Gastrointestinal stromal tumor"/>
</dbReference>
<dbReference type="Orphanet" id="168947">
    <property type="disease" value="Myeloid/lymphoid neoplasm associated with PDGFRA rearrangement"/>
</dbReference>
<dbReference type="Orphanet" id="314950">
    <property type="disease" value="Primary hypereosinophilic syndrome"/>
</dbReference>
<dbReference type="PharmGKB" id="PA33147"/>
<dbReference type="VEuPathDB" id="HostDB:ENSG00000134853"/>
<dbReference type="eggNOG" id="KOG0200">
    <property type="taxonomic scope" value="Eukaryota"/>
</dbReference>
<dbReference type="GeneTree" id="ENSGT00940000156021"/>
<dbReference type="HOGENOM" id="CLU_000288_49_0_1"/>
<dbReference type="InParanoid" id="P16234"/>
<dbReference type="OMA" id="PGLILCQ"/>
<dbReference type="OrthoDB" id="9936425at2759"/>
<dbReference type="PAN-GO" id="P16234">
    <property type="GO annotations" value="8 GO annotations based on evolutionary models"/>
</dbReference>
<dbReference type="PhylomeDB" id="P16234"/>
<dbReference type="TreeFam" id="TF325768"/>
<dbReference type="BRENDA" id="2.7.10.1">
    <property type="organism ID" value="2681"/>
</dbReference>
<dbReference type="PathwayCommons" id="P16234"/>
<dbReference type="Reactome" id="R-HSA-1257604">
    <property type="pathway name" value="PIP3 activates AKT signaling"/>
</dbReference>
<dbReference type="Reactome" id="R-HSA-186763">
    <property type="pathway name" value="Downstream signal transduction"/>
</dbReference>
<dbReference type="Reactome" id="R-HSA-186797">
    <property type="pathway name" value="Signaling by PDGF"/>
</dbReference>
<dbReference type="Reactome" id="R-HSA-2219530">
    <property type="pathway name" value="Constitutive Signaling by Aberrant PI3K in Cancer"/>
</dbReference>
<dbReference type="Reactome" id="R-HSA-5673001">
    <property type="pathway name" value="RAF/MAP kinase cascade"/>
</dbReference>
<dbReference type="Reactome" id="R-HSA-6811558">
    <property type="pathway name" value="PI5P, PP2A and IER3 Regulate PI3K/AKT Signaling"/>
</dbReference>
<dbReference type="Reactome" id="R-HSA-9673767">
    <property type="pathway name" value="Signaling by PDGFRA transmembrane, juxtamembrane and kinase domain mutants"/>
</dbReference>
<dbReference type="Reactome" id="R-HSA-9673770">
    <property type="pathway name" value="Signaling by PDGFRA extracellular domain mutants"/>
</dbReference>
<dbReference type="Reactome" id="R-HSA-9674396">
    <property type="pathway name" value="Imatinib-resistant PDGFR mutants"/>
</dbReference>
<dbReference type="Reactome" id="R-HSA-9674401">
    <property type="pathway name" value="Sunitinib-resistant PDGFR mutants"/>
</dbReference>
<dbReference type="Reactome" id="R-HSA-9674403">
    <property type="pathway name" value="Regorafenib-resistant PDGFR mutants"/>
</dbReference>
<dbReference type="Reactome" id="R-HSA-9674404">
    <property type="pathway name" value="Sorafenib-resistant PDGFR mutants"/>
</dbReference>
<dbReference type="Reactome" id="R-HSA-9674428">
    <property type="pathway name" value="PDGFR mutants bind TKIs"/>
</dbReference>
<dbReference type="SignaLink" id="P16234"/>
<dbReference type="SIGNOR" id="P16234"/>
<dbReference type="BioGRID-ORCS" id="5156">
    <property type="hits" value="40 hits in 1185 CRISPR screens"/>
</dbReference>
<dbReference type="CD-CODE" id="91857CE7">
    <property type="entry name" value="Nucleolus"/>
</dbReference>
<dbReference type="ChiTaRS" id="PDGFRA">
    <property type="organism name" value="human"/>
</dbReference>
<dbReference type="GeneWiki" id="PDGFRA"/>
<dbReference type="GenomeRNAi" id="5156"/>
<dbReference type="Pharos" id="P16234">
    <property type="development level" value="Tclin"/>
</dbReference>
<dbReference type="PRO" id="PR:P16234"/>
<dbReference type="Proteomes" id="UP000005640">
    <property type="component" value="Chromosome 4"/>
</dbReference>
<dbReference type="RNAct" id="P16234">
    <property type="molecule type" value="protein"/>
</dbReference>
<dbReference type="Bgee" id="ENSG00000134853">
    <property type="expression patterns" value="Expressed in tibia and 207 other cell types or tissues"/>
</dbReference>
<dbReference type="ExpressionAtlas" id="P16234">
    <property type="expression patterns" value="baseline and differential"/>
</dbReference>
<dbReference type="GO" id="GO:0030054">
    <property type="term" value="C:cell junction"/>
    <property type="evidence" value="ECO:0000314"/>
    <property type="project" value="HPA"/>
</dbReference>
<dbReference type="GO" id="GO:0005929">
    <property type="term" value="C:cilium"/>
    <property type="evidence" value="ECO:0000314"/>
    <property type="project" value="HPA"/>
</dbReference>
<dbReference type="GO" id="GO:0005737">
    <property type="term" value="C:cytoplasm"/>
    <property type="evidence" value="ECO:0000250"/>
    <property type="project" value="UniProtKB"/>
</dbReference>
<dbReference type="GO" id="GO:0005829">
    <property type="term" value="C:cytosol"/>
    <property type="evidence" value="ECO:0000314"/>
    <property type="project" value="HPA"/>
</dbReference>
<dbReference type="GO" id="GO:0005789">
    <property type="term" value="C:endoplasmic reticulum membrane"/>
    <property type="evidence" value="ECO:0000304"/>
    <property type="project" value="Reactome"/>
</dbReference>
<dbReference type="GO" id="GO:0009897">
    <property type="term" value="C:external side of plasma membrane"/>
    <property type="evidence" value="ECO:0007669"/>
    <property type="project" value="Ensembl"/>
</dbReference>
<dbReference type="GO" id="GO:0005794">
    <property type="term" value="C:Golgi apparatus"/>
    <property type="evidence" value="ECO:0000250"/>
    <property type="project" value="UniProtKB"/>
</dbReference>
<dbReference type="GO" id="GO:0016020">
    <property type="term" value="C:membrane"/>
    <property type="evidence" value="ECO:0007005"/>
    <property type="project" value="UniProtKB"/>
</dbReference>
<dbReference type="GO" id="GO:0005902">
    <property type="term" value="C:microvillus"/>
    <property type="evidence" value="ECO:0007669"/>
    <property type="project" value="Ensembl"/>
</dbReference>
<dbReference type="GO" id="GO:0016604">
    <property type="term" value="C:nuclear body"/>
    <property type="evidence" value="ECO:0000314"/>
    <property type="project" value="HPA"/>
</dbReference>
<dbReference type="GO" id="GO:0005654">
    <property type="term" value="C:nucleoplasm"/>
    <property type="evidence" value="ECO:0000314"/>
    <property type="project" value="HPA"/>
</dbReference>
<dbReference type="GO" id="GO:0005634">
    <property type="term" value="C:nucleus"/>
    <property type="evidence" value="ECO:0000250"/>
    <property type="project" value="UniProtKB"/>
</dbReference>
<dbReference type="GO" id="GO:0005886">
    <property type="term" value="C:plasma membrane"/>
    <property type="evidence" value="ECO:0000314"/>
    <property type="project" value="HPA"/>
</dbReference>
<dbReference type="GO" id="GO:1990270">
    <property type="term" value="C:platelet-derived growth factor receptor-ligand complex"/>
    <property type="evidence" value="ECO:0000353"/>
    <property type="project" value="ComplexPortal"/>
</dbReference>
<dbReference type="GO" id="GO:0032991">
    <property type="term" value="C:protein-containing complex"/>
    <property type="evidence" value="ECO:0000314"/>
    <property type="project" value="MGI"/>
</dbReference>
<dbReference type="GO" id="GO:0043235">
    <property type="term" value="C:receptor complex"/>
    <property type="evidence" value="ECO:0000318"/>
    <property type="project" value="GO_Central"/>
</dbReference>
<dbReference type="GO" id="GO:0005524">
    <property type="term" value="F:ATP binding"/>
    <property type="evidence" value="ECO:0007669"/>
    <property type="project" value="UniProtKB-KW"/>
</dbReference>
<dbReference type="GO" id="GO:0160185">
    <property type="term" value="F:phospholipase C activator activity"/>
    <property type="evidence" value="ECO:0000315"/>
    <property type="project" value="UniProtKB"/>
</dbReference>
<dbReference type="GO" id="GO:0005018">
    <property type="term" value="F:platelet-derived growth factor alpha-receptor activity"/>
    <property type="evidence" value="ECO:0000314"/>
    <property type="project" value="UniProtKB"/>
</dbReference>
<dbReference type="GO" id="GO:0048407">
    <property type="term" value="F:platelet-derived growth factor binding"/>
    <property type="evidence" value="ECO:0000314"/>
    <property type="project" value="UniProtKB"/>
</dbReference>
<dbReference type="GO" id="GO:0005161">
    <property type="term" value="F:platelet-derived growth factor receptor binding"/>
    <property type="evidence" value="ECO:0000353"/>
    <property type="project" value="BHF-UCL"/>
</dbReference>
<dbReference type="GO" id="GO:0042803">
    <property type="term" value="F:protein homodimerization activity"/>
    <property type="evidence" value="ECO:0000314"/>
    <property type="project" value="BHF-UCL"/>
</dbReference>
<dbReference type="GO" id="GO:0004672">
    <property type="term" value="F:protein kinase activity"/>
    <property type="evidence" value="ECO:0000314"/>
    <property type="project" value="MGI"/>
</dbReference>
<dbReference type="GO" id="GO:0044877">
    <property type="term" value="F:protein-containing complex binding"/>
    <property type="evidence" value="ECO:0007669"/>
    <property type="project" value="Ensembl"/>
</dbReference>
<dbReference type="GO" id="GO:0004714">
    <property type="term" value="F:transmembrane receptor protein tyrosine kinase activity"/>
    <property type="evidence" value="ECO:0000314"/>
    <property type="project" value="UniProtKB"/>
</dbReference>
<dbReference type="GO" id="GO:0038085">
    <property type="term" value="F:vascular endothelial growth factor binding"/>
    <property type="evidence" value="ECO:0000353"/>
    <property type="project" value="BHF-UCL"/>
</dbReference>
<dbReference type="GO" id="GO:0005021">
    <property type="term" value="F:vascular endothelial growth factor receptor activity"/>
    <property type="evidence" value="ECO:0000314"/>
    <property type="project" value="BHF-UCL"/>
</dbReference>
<dbReference type="GO" id="GO:0030325">
    <property type="term" value="P:adrenal gland development"/>
    <property type="evidence" value="ECO:0007669"/>
    <property type="project" value="Ensembl"/>
</dbReference>
<dbReference type="GO" id="GO:0055003">
    <property type="term" value="P:cardiac myofibril assembly"/>
    <property type="evidence" value="ECO:0000250"/>
    <property type="project" value="UniProtKB"/>
</dbReference>
<dbReference type="GO" id="GO:0001775">
    <property type="term" value="P:cell activation"/>
    <property type="evidence" value="ECO:0000304"/>
    <property type="project" value="BHF-UCL"/>
</dbReference>
<dbReference type="GO" id="GO:0060326">
    <property type="term" value="P:cell chemotaxis"/>
    <property type="evidence" value="ECO:0007669"/>
    <property type="project" value="Ensembl"/>
</dbReference>
<dbReference type="GO" id="GO:0016477">
    <property type="term" value="P:cell migration"/>
    <property type="evidence" value="ECO:0000318"/>
    <property type="project" value="GO_Central"/>
</dbReference>
<dbReference type="GO" id="GO:0007169">
    <property type="term" value="P:cell surface receptor protein tyrosine kinase signaling pathway"/>
    <property type="evidence" value="ECO:0000318"/>
    <property type="project" value="GO_Central"/>
</dbReference>
<dbReference type="GO" id="GO:0071230">
    <property type="term" value="P:cellular response to amino acid stimulus"/>
    <property type="evidence" value="ECO:0007669"/>
    <property type="project" value="Ensembl"/>
</dbReference>
<dbReference type="GO" id="GO:0034614">
    <property type="term" value="P:cellular response to reactive oxygen species"/>
    <property type="evidence" value="ECO:0000314"/>
    <property type="project" value="MGI"/>
</dbReference>
<dbReference type="GO" id="GO:0048701">
    <property type="term" value="P:embryonic cranial skeleton morphogenesis"/>
    <property type="evidence" value="ECO:0000250"/>
    <property type="project" value="UniProtKB"/>
</dbReference>
<dbReference type="GO" id="GO:0048557">
    <property type="term" value="P:embryonic digestive tract morphogenesis"/>
    <property type="evidence" value="ECO:0000250"/>
    <property type="project" value="UniProtKB"/>
</dbReference>
<dbReference type="GO" id="GO:0048704">
    <property type="term" value="P:embryonic skeletal system morphogenesis"/>
    <property type="evidence" value="ECO:0000250"/>
    <property type="project" value="UniProtKB"/>
</dbReference>
<dbReference type="GO" id="GO:0008210">
    <property type="term" value="P:estrogen metabolic process"/>
    <property type="evidence" value="ECO:0007669"/>
    <property type="project" value="Ensembl"/>
</dbReference>
<dbReference type="GO" id="GO:0030198">
    <property type="term" value="P:extracellular matrix organization"/>
    <property type="evidence" value="ECO:0007669"/>
    <property type="project" value="Ensembl"/>
</dbReference>
<dbReference type="GO" id="GO:0060325">
    <property type="term" value="P:face morphogenesis"/>
    <property type="evidence" value="ECO:0007669"/>
    <property type="project" value="Ensembl"/>
</dbReference>
<dbReference type="GO" id="GO:0002244">
    <property type="term" value="P:hematopoietic progenitor cell differentiation"/>
    <property type="evidence" value="ECO:0007669"/>
    <property type="project" value="Ensembl"/>
</dbReference>
<dbReference type="GO" id="GO:0001701">
    <property type="term" value="P:in utero embryonic development"/>
    <property type="evidence" value="ECO:0007669"/>
    <property type="project" value="Ensembl"/>
</dbReference>
<dbReference type="GO" id="GO:0033327">
    <property type="term" value="P:Leydig cell differentiation"/>
    <property type="evidence" value="ECO:0007669"/>
    <property type="project" value="Ensembl"/>
</dbReference>
<dbReference type="GO" id="GO:0030324">
    <property type="term" value="P:lung development"/>
    <property type="evidence" value="ECO:0007669"/>
    <property type="project" value="Ensembl"/>
</dbReference>
<dbReference type="GO" id="GO:0001553">
    <property type="term" value="P:luteinization"/>
    <property type="evidence" value="ECO:0000250"/>
    <property type="project" value="UniProtKB"/>
</dbReference>
<dbReference type="GO" id="GO:0030539">
    <property type="term" value="P:male genitalia development"/>
    <property type="evidence" value="ECO:0007669"/>
    <property type="project" value="Ensembl"/>
</dbReference>
<dbReference type="GO" id="GO:0072277">
    <property type="term" value="P:metanephric glomerular capillary formation"/>
    <property type="evidence" value="ECO:0000250"/>
    <property type="project" value="UniProtKB"/>
</dbReference>
<dbReference type="GO" id="GO:0010544">
    <property type="term" value="P:negative regulation of platelet activation"/>
    <property type="evidence" value="ECO:0000314"/>
    <property type="project" value="UniProtKB"/>
</dbReference>
<dbReference type="GO" id="GO:0042475">
    <property type="term" value="P:odontogenesis of dentin-containing tooth"/>
    <property type="evidence" value="ECO:0007669"/>
    <property type="project" value="Ensembl"/>
</dbReference>
<dbReference type="GO" id="GO:0018108">
    <property type="term" value="P:peptidyl-tyrosine phosphorylation"/>
    <property type="evidence" value="ECO:0000314"/>
    <property type="project" value="UniProtKB"/>
</dbReference>
<dbReference type="GO" id="GO:0070527">
    <property type="term" value="P:platelet aggregation"/>
    <property type="evidence" value="ECO:0000315"/>
    <property type="project" value="UniProtKB"/>
</dbReference>
<dbReference type="GO" id="GO:0048008">
    <property type="term" value="P:platelet-derived growth factor receptor signaling pathway"/>
    <property type="evidence" value="ECO:0000314"/>
    <property type="project" value="BHF-UCL"/>
</dbReference>
<dbReference type="GO" id="GO:0035790">
    <property type="term" value="P:platelet-derived growth factor receptor-alpha signaling pathway"/>
    <property type="evidence" value="ECO:0000315"/>
    <property type="project" value="UniProtKB"/>
</dbReference>
<dbReference type="GO" id="GO:0050850">
    <property type="term" value="P:positive regulation of calcium-mediated signaling"/>
    <property type="evidence" value="ECO:0000315"/>
    <property type="project" value="UniProtKB"/>
</dbReference>
<dbReference type="GO" id="GO:0030335">
    <property type="term" value="P:positive regulation of cell migration"/>
    <property type="evidence" value="ECO:0000314"/>
    <property type="project" value="BHF-UCL"/>
</dbReference>
<dbReference type="GO" id="GO:0008284">
    <property type="term" value="P:positive regulation of cell population proliferation"/>
    <property type="evidence" value="ECO:0000314"/>
    <property type="project" value="BHF-UCL"/>
</dbReference>
<dbReference type="GO" id="GO:0038091">
    <property type="term" value="P:positive regulation of cell proliferation by VEGF-activated platelet derived growth factor receptor signaling pathway"/>
    <property type="evidence" value="ECO:0000314"/>
    <property type="project" value="BHF-UCL"/>
</dbReference>
<dbReference type="GO" id="GO:0050921">
    <property type="term" value="P:positive regulation of chemotaxis"/>
    <property type="evidence" value="ECO:0000315"/>
    <property type="project" value="UniProtKB"/>
</dbReference>
<dbReference type="GO" id="GO:0070374">
    <property type="term" value="P:positive regulation of ERK1 and ERK2 cascade"/>
    <property type="evidence" value="ECO:0000315"/>
    <property type="project" value="UniProtKB"/>
</dbReference>
<dbReference type="GO" id="GO:0048146">
    <property type="term" value="P:positive regulation of fibroblast proliferation"/>
    <property type="evidence" value="ECO:0000314"/>
    <property type="project" value="BHF-UCL"/>
</dbReference>
<dbReference type="GO" id="GO:0051897">
    <property type="term" value="P:positive regulation of phosphatidylinositol 3-kinase/protein kinase B signal transduction"/>
    <property type="evidence" value="ECO:0000304"/>
    <property type="project" value="UniProtKB"/>
</dbReference>
<dbReference type="GO" id="GO:0046777">
    <property type="term" value="P:protein autophosphorylation"/>
    <property type="evidence" value="ECO:0000314"/>
    <property type="project" value="UniProtKB"/>
</dbReference>
<dbReference type="GO" id="GO:0032956">
    <property type="term" value="P:regulation of actin cytoskeleton organization"/>
    <property type="evidence" value="ECO:0000304"/>
    <property type="project" value="UniProtKB"/>
</dbReference>
<dbReference type="GO" id="GO:2000739">
    <property type="term" value="P:regulation of mesenchymal stem cell differentiation"/>
    <property type="evidence" value="ECO:0000315"/>
    <property type="project" value="UniProtKB"/>
</dbReference>
<dbReference type="GO" id="GO:0061298">
    <property type="term" value="P:retina vasculature development in camera-type eye"/>
    <property type="evidence" value="ECO:0000250"/>
    <property type="project" value="UniProtKB"/>
</dbReference>
<dbReference type="GO" id="GO:0060021">
    <property type="term" value="P:roof of mouth development"/>
    <property type="evidence" value="ECO:0007669"/>
    <property type="project" value="Ensembl"/>
</dbReference>
<dbReference type="GO" id="GO:0023019">
    <property type="term" value="P:signal transduction involved in regulation of gene expression"/>
    <property type="evidence" value="ECO:0007669"/>
    <property type="project" value="Ensembl"/>
</dbReference>
<dbReference type="GO" id="GO:0050872">
    <property type="term" value="P:white fat cell differentiation"/>
    <property type="evidence" value="ECO:0007669"/>
    <property type="project" value="Ensembl"/>
</dbReference>
<dbReference type="GO" id="GO:0042060">
    <property type="term" value="P:wound healing"/>
    <property type="evidence" value="ECO:0000250"/>
    <property type="project" value="UniProtKB"/>
</dbReference>
<dbReference type="CDD" id="cd05859">
    <property type="entry name" value="Ig4_PDGFR"/>
    <property type="match status" value="1"/>
</dbReference>
<dbReference type="CDD" id="cd05861">
    <property type="entry name" value="IgI_PDGFR-alphabeta"/>
    <property type="match status" value="1"/>
</dbReference>
<dbReference type="CDD" id="cd05105">
    <property type="entry name" value="PTKc_PDGFR_alpha"/>
    <property type="match status" value="1"/>
</dbReference>
<dbReference type="FunFam" id="2.60.40.10:FF:000720">
    <property type="entry name" value="Platelet-derived growth factor receptor alpha"/>
    <property type="match status" value="1"/>
</dbReference>
<dbReference type="FunFam" id="2.60.40.10:FF:000725">
    <property type="entry name" value="Platelet-derived growth factor receptor alpha"/>
    <property type="match status" value="1"/>
</dbReference>
<dbReference type="FunFam" id="2.60.40.10:FF:000776">
    <property type="entry name" value="Platelet-derived growth factor receptor alpha"/>
    <property type="match status" value="1"/>
</dbReference>
<dbReference type="FunFam" id="2.60.40.10:FF:000832">
    <property type="entry name" value="Platelet-derived growth factor receptor alpha"/>
    <property type="match status" value="1"/>
</dbReference>
<dbReference type="FunFam" id="3.30.200.20:FF:000025">
    <property type="entry name" value="Platelet-derived growth factor receptor alpha"/>
    <property type="match status" value="1"/>
</dbReference>
<dbReference type="FunFam" id="2.60.40.10:FF:000223">
    <property type="entry name" value="Platelet-derived growth factor receptor beta"/>
    <property type="match status" value="1"/>
</dbReference>
<dbReference type="FunFam" id="1.10.510.10:FF:001735">
    <property type="entry name" value="T0011027 isoform 1"/>
    <property type="match status" value="1"/>
</dbReference>
<dbReference type="Gene3D" id="2.60.40.10">
    <property type="entry name" value="Immunoglobulins"/>
    <property type="match status" value="5"/>
</dbReference>
<dbReference type="Gene3D" id="3.30.200.20">
    <property type="entry name" value="Phosphorylase Kinase, domain 1"/>
    <property type="match status" value="1"/>
</dbReference>
<dbReference type="Gene3D" id="1.10.510.10">
    <property type="entry name" value="Transferase(Phosphotransferase) domain 1"/>
    <property type="match status" value="1"/>
</dbReference>
<dbReference type="InterPro" id="IPR007110">
    <property type="entry name" value="Ig-like_dom"/>
</dbReference>
<dbReference type="InterPro" id="IPR036179">
    <property type="entry name" value="Ig-like_dom_sf"/>
</dbReference>
<dbReference type="InterPro" id="IPR013783">
    <property type="entry name" value="Ig-like_fold"/>
</dbReference>
<dbReference type="InterPro" id="IPR013098">
    <property type="entry name" value="Ig_I-set"/>
</dbReference>
<dbReference type="InterPro" id="IPR003599">
    <property type="entry name" value="Ig_sub"/>
</dbReference>
<dbReference type="InterPro" id="IPR003598">
    <property type="entry name" value="Ig_sub2"/>
</dbReference>
<dbReference type="InterPro" id="IPR011009">
    <property type="entry name" value="Kinase-like_dom_sf"/>
</dbReference>
<dbReference type="InterPro" id="IPR027290">
    <property type="entry name" value="PDGFRA"/>
</dbReference>
<dbReference type="InterPro" id="IPR000719">
    <property type="entry name" value="Prot_kinase_dom"/>
</dbReference>
<dbReference type="InterPro" id="IPR017441">
    <property type="entry name" value="Protein_kinase_ATP_BS"/>
</dbReference>
<dbReference type="InterPro" id="IPR050122">
    <property type="entry name" value="RTK"/>
</dbReference>
<dbReference type="InterPro" id="IPR001245">
    <property type="entry name" value="Ser-Thr/Tyr_kinase_cat_dom"/>
</dbReference>
<dbReference type="InterPro" id="IPR008266">
    <property type="entry name" value="Tyr_kinase_AS"/>
</dbReference>
<dbReference type="InterPro" id="IPR020635">
    <property type="entry name" value="Tyr_kinase_cat_dom"/>
</dbReference>
<dbReference type="InterPro" id="IPR001824">
    <property type="entry name" value="Tyr_kinase_rcpt_3_CS"/>
</dbReference>
<dbReference type="PANTHER" id="PTHR24416:SF52">
    <property type="entry name" value="PLATELET-DERIVED GROWTH FACTOR RECEPTOR ALPHA"/>
    <property type="match status" value="1"/>
</dbReference>
<dbReference type="PANTHER" id="PTHR24416">
    <property type="entry name" value="TYROSINE-PROTEIN KINASE RECEPTOR"/>
    <property type="match status" value="1"/>
</dbReference>
<dbReference type="Pfam" id="PF07679">
    <property type="entry name" value="I-set"/>
    <property type="match status" value="2"/>
</dbReference>
<dbReference type="Pfam" id="PF25305">
    <property type="entry name" value="Ig_PDGFR_d4"/>
    <property type="match status" value="1"/>
</dbReference>
<dbReference type="Pfam" id="PF07714">
    <property type="entry name" value="PK_Tyr_Ser-Thr"/>
    <property type="match status" value="1"/>
</dbReference>
<dbReference type="PIRSF" id="PIRSF500950">
    <property type="entry name" value="Alpha-PDGF_receptor"/>
    <property type="match status" value="1"/>
</dbReference>
<dbReference type="PIRSF" id="PIRSF000615">
    <property type="entry name" value="TyrPK_CSF1-R"/>
    <property type="match status" value="1"/>
</dbReference>
<dbReference type="PRINTS" id="PR01832">
    <property type="entry name" value="VEGFRECEPTOR"/>
</dbReference>
<dbReference type="SMART" id="SM00409">
    <property type="entry name" value="IG"/>
    <property type="match status" value="4"/>
</dbReference>
<dbReference type="SMART" id="SM00408">
    <property type="entry name" value="IGc2"/>
    <property type="match status" value="3"/>
</dbReference>
<dbReference type="SMART" id="SM00220">
    <property type="entry name" value="S_TKc"/>
    <property type="match status" value="1"/>
</dbReference>
<dbReference type="SMART" id="SM00219">
    <property type="entry name" value="TyrKc"/>
    <property type="match status" value="1"/>
</dbReference>
<dbReference type="SUPFAM" id="SSF48726">
    <property type="entry name" value="Immunoglobulin"/>
    <property type="match status" value="4"/>
</dbReference>
<dbReference type="SUPFAM" id="SSF56112">
    <property type="entry name" value="Protein kinase-like (PK-like)"/>
    <property type="match status" value="1"/>
</dbReference>
<dbReference type="PROSITE" id="PS50835">
    <property type="entry name" value="IG_LIKE"/>
    <property type="match status" value="2"/>
</dbReference>
<dbReference type="PROSITE" id="PS00107">
    <property type="entry name" value="PROTEIN_KINASE_ATP"/>
    <property type="match status" value="1"/>
</dbReference>
<dbReference type="PROSITE" id="PS50011">
    <property type="entry name" value="PROTEIN_KINASE_DOM"/>
    <property type="match status" value="1"/>
</dbReference>
<dbReference type="PROSITE" id="PS00109">
    <property type="entry name" value="PROTEIN_KINASE_TYR"/>
    <property type="match status" value="1"/>
</dbReference>
<dbReference type="PROSITE" id="PS00240">
    <property type="entry name" value="RECEPTOR_TYR_KIN_III"/>
    <property type="match status" value="1"/>
</dbReference>
<feature type="signal peptide">
    <location>
        <begin position="1"/>
        <end position="23"/>
    </location>
</feature>
<feature type="chain" id="PRO_0000016760" description="Platelet-derived growth factor receptor alpha">
    <location>
        <begin position="24"/>
        <end position="1089"/>
    </location>
</feature>
<feature type="topological domain" description="Extracellular" evidence="3">
    <location>
        <begin position="24"/>
        <end position="528"/>
    </location>
</feature>
<feature type="transmembrane region" description="Helical" evidence="3">
    <location>
        <begin position="529"/>
        <end position="549"/>
    </location>
</feature>
<feature type="topological domain" description="Cytoplasmic" evidence="3">
    <location>
        <begin position="550"/>
        <end position="1089"/>
    </location>
</feature>
<feature type="domain" description="Ig-like C2-type 1">
    <location>
        <begin position="24"/>
        <end position="113"/>
    </location>
</feature>
<feature type="domain" description="Ig-like C2-type 2">
    <location>
        <begin position="117"/>
        <end position="201"/>
    </location>
</feature>
<feature type="domain" description="Ig-like C2-type 3">
    <location>
        <begin position="202"/>
        <end position="306"/>
    </location>
</feature>
<feature type="domain" description="Ig-like C2-type 4">
    <location>
        <begin position="319"/>
        <end position="410"/>
    </location>
</feature>
<feature type="domain" description="Ig-like C2-type 5">
    <location>
        <begin position="414"/>
        <end position="517"/>
    </location>
</feature>
<feature type="domain" description="Protein kinase" evidence="5">
    <location>
        <begin position="593"/>
        <end position="954"/>
    </location>
</feature>
<feature type="region of interest" description="Disordered" evidence="7">
    <location>
        <begin position="1018"/>
        <end position="1089"/>
    </location>
</feature>
<feature type="compositionally biased region" description="Polar residues" evidence="7">
    <location>
        <begin position="1041"/>
        <end position="1059"/>
    </location>
</feature>
<feature type="compositionally biased region" description="Acidic residues" evidence="7">
    <location>
        <begin position="1065"/>
        <end position="1089"/>
    </location>
</feature>
<feature type="active site" description="Proton acceptor" evidence="5 6">
    <location>
        <position position="818"/>
    </location>
</feature>
<feature type="binding site" evidence="5">
    <location>
        <begin position="599"/>
        <end position="607"/>
    </location>
    <ligand>
        <name>ATP</name>
        <dbReference type="ChEBI" id="CHEBI:30616"/>
    </ligand>
</feature>
<feature type="binding site" evidence="5">
    <location>
        <position position="627"/>
    </location>
    <ligand>
        <name>ATP</name>
        <dbReference type="ChEBI" id="CHEBI:30616"/>
    </ligand>
</feature>
<feature type="site" description="Breakpoint for interstitial deletion to form the FIP1L1-PDGFRA fusion protein">
    <location>
        <begin position="578"/>
        <end position="579"/>
    </location>
</feature>
<feature type="modified residue" description="Phosphotyrosine; by autocatalysis" evidence="9">
    <location>
        <position position="572"/>
    </location>
</feature>
<feature type="modified residue" description="Phosphotyrosine; by autocatalysis" evidence="9">
    <location>
        <position position="574"/>
    </location>
</feature>
<feature type="modified residue" description="Phosphotyrosine; by autocatalysis" evidence="11 45">
    <location>
        <position position="720"/>
    </location>
</feature>
<feature type="modified residue" description="Phosphotyrosine; by autocatalysis" evidence="21">
    <location>
        <position position="731"/>
    </location>
</feature>
<feature type="modified residue" description="Phosphotyrosine; by autocatalysis" evidence="21">
    <location>
        <position position="742"/>
    </location>
</feature>
<feature type="modified residue" description="Phosphotyrosine; by autocatalysis" evidence="26">
    <location>
        <position position="754"/>
    </location>
</feature>
<feature type="modified residue" description="Phosphotyrosine; by autocatalysis" evidence="8">
    <location>
        <position position="762"/>
    </location>
</feature>
<feature type="modified residue" description="Phosphotyrosine; by autocatalysis" evidence="42">
    <location>
        <position position="768"/>
    </location>
</feature>
<feature type="modified residue" description="Phosphotyrosine; by autocatalysis" evidence="1">
    <location>
        <position position="849"/>
    </location>
</feature>
<feature type="modified residue" description="Phosphotyrosine; by autocatalysis" evidence="38">
    <location>
        <position position="988"/>
    </location>
</feature>
<feature type="modified residue" description="Phosphotyrosine; by autocatalysis" evidence="38">
    <location>
        <position position="1018"/>
    </location>
</feature>
<feature type="glycosylation site" description="N-linked (GlcNAc...) asparagine" evidence="3">
    <location>
        <position position="42"/>
    </location>
</feature>
<feature type="glycosylation site" description="N-linked (GlcNAc...) asparagine" evidence="3">
    <location>
        <position position="76"/>
    </location>
</feature>
<feature type="glycosylation site" description="N-linked (GlcNAc...) asparagine" evidence="3">
    <location>
        <position position="103"/>
    </location>
</feature>
<feature type="glycosylation site" description="N-linked (GlcNAc...) asparagine" evidence="3">
    <location>
        <position position="179"/>
    </location>
</feature>
<feature type="glycosylation site" description="N-linked (GlcNAc...) asparagine" evidence="3">
    <location>
        <position position="353"/>
    </location>
</feature>
<feature type="glycosylation site" description="N-linked (GlcNAc...) asparagine" evidence="3">
    <location>
        <position position="359"/>
    </location>
</feature>
<feature type="glycosylation site" description="N-linked (GlcNAc...) asparagine" evidence="3">
    <location>
        <position position="458"/>
    </location>
</feature>
<feature type="glycosylation site" description="N-linked (GlcNAc...) asparagine" evidence="3">
    <location>
        <position position="468"/>
    </location>
</feature>
<feature type="disulfide bond" evidence="4">
    <location>
        <begin position="49"/>
        <end position="100"/>
    </location>
</feature>
<feature type="disulfide bond" evidence="4">
    <location>
        <begin position="150"/>
        <end position="189"/>
    </location>
</feature>
<feature type="disulfide bond" evidence="4">
    <location>
        <begin position="235"/>
        <end position="290"/>
    </location>
</feature>
<feature type="disulfide bond" evidence="4">
    <location>
        <begin position="435"/>
        <end position="501"/>
    </location>
</feature>
<feature type="splice variant" id="VSP_007833" description="In isoform 2." evidence="46">
    <original>ATSELDLEM</original>
    <variation>GTCIISFLL</variation>
    <location>
        <begin position="210"/>
        <end position="218"/>
    </location>
</feature>
<feature type="splice variant" id="VSP_007834" description="In isoform 2." evidence="46">
    <location>
        <begin position="219"/>
        <end position="1089"/>
    </location>
</feature>
<feature type="splice variant" id="VSP_042015" description="In isoform 3." evidence="46">
    <original>YVILSFENNGDYMDMKQADTTQYV</original>
    <variation>SGQGCLSSGTLQELSVDLQARGPC</variation>
    <location>
        <begin position="720"/>
        <end position="743"/>
    </location>
</feature>
<feature type="splice variant" id="VSP_042016" description="In isoform 3." evidence="46">
    <location>
        <begin position="744"/>
        <end position="1089"/>
    </location>
</feature>
<feature type="sequence variant" id="VAR_042032" description="In dbSNP:rs36035373." evidence="25">
    <original>G</original>
    <variation>D</variation>
    <location>
        <position position="79"/>
    </location>
</feature>
<feature type="sequence variant" id="VAR_042033" description="In dbSNP:rs55865821." evidence="25">
    <original>G</original>
    <variation>D</variation>
    <location>
        <position position="426"/>
    </location>
</feature>
<feature type="sequence variant" id="VAR_034378" description="In dbSNP:rs35597368." evidence="18 19 25">
    <original>S</original>
    <variation>P</variation>
    <location>
        <position position="478"/>
    </location>
</feature>
<feature type="sequence variant" id="VAR_066460" description="In a hypereosinophilic syndrome sample; does not lead to constitutive kinase activation." evidence="29">
    <original>R</original>
    <variation>G</variation>
    <location>
        <position position="481"/>
    </location>
</feature>
<feature type="sequence variant" id="VAR_066461" description="In a hypereosinophilic syndrome sample; does not lead to constitutive kinase activation; dbSNP:rs2110293008." evidence="29">
    <original>L</original>
    <variation>P</variation>
    <location>
        <position position="507"/>
    </location>
</feature>
<feature type="sequence variant" id="VAR_083158" description="In GISTPS; increased platelet-derived growth factor alpha-receptor activity; constitutively activated kinase; dbSNP:rs121908589." evidence="22">
    <original>Y</original>
    <variation>C</variation>
    <location>
        <position position="555"/>
    </location>
</feature>
<feature type="sequence variant" id="VAR_066462" description="In a GIST sample; constitutively activated kinase; dbSNP:rs121908586." evidence="14 20">
    <original>V</original>
    <variation>D</variation>
    <location>
        <position position="561"/>
    </location>
</feature>
<feature type="sequence variant" id="VAR_066463" description="In a hypereosinophilic syndrome sample; does not lead to constitutive kinase activation." evidence="29">
    <original>I</original>
    <variation>M</variation>
    <location>
        <position position="562"/>
    </location>
</feature>
<feature type="sequence variant" id="VAR_066464" description="In a hypereosinophilic syndrome sample; does not lead to constitutive kinase activation; dbSNP:rs2110299899." evidence="29">
    <original>H</original>
    <variation>R</variation>
    <location>
        <position position="570"/>
    </location>
</feature>
<feature type="sequence variant" id="VAR_066465" description="In a hypereosinophilic syndrome sample; constitutively activated kinase; dbSNP:rs1553904887." evidence="29">
    <original>H</original>
    <variation>Q</variation>
    <location>
        <position position="650"/>
    </location>
</feature>
<feature type="sequence variant" id="VAR_083159" description="In GISTPS; uncertain significance; dbSNP:rs2110311696." evidence="35">
    <original>P</original>
    <variation>L</variation>
    <location>
        <position position="653"/>
    </location>
</feature>
<feature type="sequence variant" id="VAR_066466" description="In GIST sample; constitutively activated kinase; dbSNP:rs1057519700." evidence="20">
    <original>N</original>
    <variation>K</variation>
    <location>
        <position position="659"/>
    </location>
</feature>
<feature type="sequence variant" id="VAR_066467" description="In a hypereosinophilic syndrome sample; constitutively activated kinase; dbSNP:rs2110311987." evidence="29">
    <original>N</original>
    <variation>S</variation>
    <location>
        <position position="659"/>
    </location>
</feature>
<feature type="sequence variant" id="VAR_066468" description="In a hypereosinophilic syndrome sample; does not lead to constitutive kinase activation." evidence="29">
    <original>L</original>
    <variation>P</variation>
    <location>
        <position position="705"/>
    </location>
</feature>
<feature type="sequence variant" id="VAR_066469" description="In a hypereosinophilic syndrome sample; constitutively activated kinase." evidence="29">
    <original>R</original>
    <variation>G</variation>
    <location>
        <position position="748"/>
    </location>
</feature>
<feature type="sequence variant" id="VAR_042034" description="In dbSNP:rs34392012." evidence="25">
    <original>R</original>
    <variation>C</variation>
    <location>
        <position position="764"/>
    </location>
</feature>
<feature type="sequence variant" id="VAR_042035" description="In a glioblastoma multiforme sample; somatic mutation." evidence="25">
    <original>G</original>
    <variation>R</variation>
    <location>
        <position position="829"/>
    </location>
</feature>
<feature type="sequence variant" id="VAR_066470" description="In a GIST sample; constitutively activated kinase." evidence="14 20">
    <location>
        <begin position="842"/>
        <end position="845"/>
    </location>
</feature>
<feature type="sequence variant" id="VAR_066471" description="In a GIST sample; imatinib resistant, constitutively activated kinase; dbSNP:rs121908585." evidence="14 20 28">
    <original>D</original>
    <variation>V</variation>
    <location>
        <position position="842"/>
    </location>
</feature>
<feature type="sequence variant" id="VAR_066472" description="In a GIST sample; imatinib sensitive, constitutively activated kinase; dbSNP:rs121913265." evidence="20">
    <original>D</original>
    <variation>Y</variation>
    <location>
        <position position="842"/>
    </location>
</feature>
<feature type="sequence variant" id="VAR_066473" description="In a GIST sample; constitutively activated kinase." evidence="14 20">
    <location>
        <begin position="845"/>
        <end position="848"/>
    </location>
</feature>
<feature type="sequence variant" id="VAR_083160" description="In GISTPS; uncertain significance; dbSNP:rs121908588." evidence="17">
    <original>D</original>
    <variation>Y</variation>
    <location>
        <position position="846"/>
    </location>
</feature>
<feature type="sequence variant" id="VAR_066474" description="In GIST; dbSNP:rs2110338334." evidence="20">
    <original>Y</original>
    <variation>C</variation>
    <location>
        <position position="849"/>
    </location>
</feature>
<feature type="sequence variant" id="VAR_066475" description="In a hypereosinophilic syndrome sample; constitutively activated kinase; dbSNP:rs2110338334." evidence="29">
    <original>Y</original>
    <variation>S</variation>
    <location>
        <position position="849"/>
    </location>
</feature>
<feature type="sequence variant" id="VAR_042036" description="In a metastatic melanoma sample; somatic mutation; dbSNP:rs779173667." evidence="25">
    <original>E</original>
    <variation>K</variation>
    <location>
        <position position="996"/>
    </location>
</feature>
<feature type="sequence variant" id="VAR_042037" description="In a lung neuroendocrine carcinoma sample; somatic mutation; dbSNP:rs376544204." evidence="25">
    <original>D</original>
    <variation>N</variation>
    <location>
        <position position="1071"/>
    </location>
</feature>
<feature type="mutagenesis site" description="Abolishes interaction with SRC-family members and impairs internalization of the activated receptor; when associated with F-574." evidence="9 16">
    <original>Y</original>
    <variation>F</variation>
    <location>
        <position position="572"/>
    </location>
</feature>
<feature type="mutagenesis site" description="Abolishes interaction with SRC-family members and impairs internalization of the activated receptor; when associated with F-572." evidence="9 16">
    <original>Y</original>
    <variation>F</variation>
    <location>
        <position position="574"/>
    </location>
</feature>
<feature type="mutagenesis site" description="Strongly reduced interaction with PTPN11 and GRB2." evidence="45">
    <original>Y</original>
    <variation>F</variation>
    <location>
        <position position="720"/>
    </location>
</feature>
<feature type="mutagenesis site" description="No effect on autophosphorylation and phosphorylation of PLCG1. Abolishes activation of phosphatidylinositol 3-kinase." evidence="21">
    <original>Y</original>
    <variation>F</variation>
    <location>
        <position position="731"/>
    </location>
</feature>
<feature type="mutagenesis site" description="No effect on autophosphorylation and phosphorylation of PLCG1. Abolishes activation of phosphatidylinositol 3-kinase." evidence="21">
    <original>Y</original>
    <variation>F</variation>
    <location>
        <position position="742"/>
    </location>
</feature>
<feature type="mutagenesis site" description="Abolishes interaction with CRK." evidence="8">
    <original>Y</original>
    <variation>F</variation>
    <location>
        <position position="762"/>
    </location>
</feature>
<feature type="strand" evidence="53">
    <location>
        <begin position="29"/>
        <end position="32"/>
    </location>
</feature>
<feature type="strand" evidence="53">
    <location>
        <begin position="35"/>
        <end position="38"/>
    </location>
</feature>
<feature type="strand" evidence="53">
    <location>
        <begin position="41"/>
        <end position="43"/>
    </location>
</feature>
<feature type="strand" evidence="53">
    <location>
        <begin position="46"/>
        <end position="53"/>
    </location>
</feature>
<feature type="strand" evidence="53">
    <location>
        <begin position="55"/>
        <end position="58"/>
    </location>
</feature>
<feature type="turn" evidence="54">
    <location>
        <begin position="62"/>
        <end position="65"/>
    </location>
</feature>
<feature type="strand" evidence="54">
    <location>
        <begin position="67"/>
        <end position="69"/>
    </location>
</feature>
<feature type="strand" evidence="53">
    <location>
        <begin position="70"/>
        <end position="72"/>
    </location>
</feature>
<feature type="strand" evidence="53">
    <location>
        <begin position="80"/>
        <end position="86"/>
    </location>
</feature>
<feature type="helix" evidence="53">
    <location>
        <begin position="92"/>
        <end position="94"/>
    </location>
</feature>
<feature type="strand" evidence="53">
    <location>
        <begin position="96"/>
        <end position="102"/>
    </location>
</feature>
<feature type="helix" evidence="53">
    <location>
        <begin position="103"/>
        <end position="105"/>
    </location>
</feature>
<feature type="strand" evidence="53">
    <location>
        <begin position="107"/>
        <end position="111"/>
    </location>
</feature>
<feature type="strand" evidence="53">
    <location>
        <begin position="114"/>
        <end position="120"/>
    </location>
</feature>
<feature type="strand" evidence="54">
    <location>
        <begin position="124"/>
        <end position="128"/>
    </location>
</feature>
<feature type="strand" evidence="53">
    <location>
        <begin position="133"/>
        <end position="141"/>
    </location>
</feature>
<feature type="strand" evidence="53">
    <location>
        <begin position="144"/>
        <end position="148"/>
    </location>
</feature>
<feature type="strand" evidence="53">
    <location>
        <begin position="152"/>
        <end position="156"/>
    </location>
</feature>
<feature type="strand" evidence="53">
    <location>
        <begin position="159"/>
        <end position="167"/>
    </location>
</feature>
<feature type="strand" evidence="53">
    <location>
        <begin position="171"/>
        <end position="173"/>
    </location>
</feature>
<feature type="turn" evidence="53">
    <location>
        <begin position="174"/>
        <end position="176"/>
    </location>
</feature>
<feature type="strand" evidence="53">
    <location>
        <begin position="177"/>
        <end position="181"/>
    </location>
</feature>
<feature type="strand" evidence="53">
    <location>
        <begin position="184"/>
        <end position="192"/>
    </location>
</feature>
<feature type="strand" evidence="53">
    <location>
        <begin position="197"/>
        <end position="199"/>
    </location>
</feature>
<feature type="strand" evidence="53">
    <location>
        <begin position="203"/>
        <end position="208"/>
    </location>
</feature>
<feature type="strand" evidence="53">
    <location>
        <begin position="216"/>
        <end position="219"/>
    </location>
</feature>
<feature type="strand" evidence="53">
    <location>
        <begin position="224"/>
        <end position="226"/>
    </location>
</feature>
<feature type="strand" evidence="53">
    <location>
        <begin position="231"/>
        <end position="237"/>
    </location>
</feature>
<feature type="strand" evidence="53">
    <location>
        <begin position="239"/>
        <end position="241"/>
    </location>
</feature>
<feature type="strand" evidence="53">
    <location>
        <begin position="246"/>
        <end position="248"/>
    </location>
</feature>
<feature type="helix" evidence="53">
    <location>
        <begin position="252"/>
        <end position="254"/>
    </location>
</feature>
<feature type="strand" evidence="53">
    <location>
        <begin position="258"/>
        <end position="264"/>
    </location>
</feature>
<feature type="strand" evidence="53">
    <location>
        <begin position="266"/>
        <end position="268"/>
    </location>
</feature>
<feature type="strand" evidence="53">
    <location>
        <begin position="270"/>
        <end position="279"/>
    </location>
</feature>
<feature type="strand" evidence="53">
    <location>
        <begin position="286"/>
        <end position="292"/>
    </location>
</feature>
<feature type="strand" evidence="53">
    <location>
        <begin position="301"/>
        <end position="306"/>
    </location>
</feature>
<feature type="strand" evidence="53">
    <location>
        <begin position="308"/>
        <end position="310"/>
    </location>
</feature>
<feature type="strand" evidence="55">
    <location>
        <begin position="560"/>
        <end position="562"/>
    </location>
</feature>
<feature type="strand" evidence="51">
    <location>
        <begin position="567"/>
        <end position="570"/>
    </location>
</feature>
<feature type="strand" evidence="51">
    <location>
        <begin position="572"/>
        <end position="574"/>
    </location>
</feature>
<feature type="helix" evidence="55">
    <location>
        <begin position="577"/>
        <end position="579"/>
    </location>
</feature>
<feature type="helix" evidence="55">
    <location>
        <begin position="584"/>
        <end position="586"/>
    </location>
</feature>
<feature type="helix" evidence="50">
    <location>
        <begin position="590"/>
        <end position="592"/>
    </location>
</feature>
<feature type="strand" evidence="50">
    <location>
        <begin position="593"/>
        <end position="601"/>
    </location>
</feature>
<feature type="strand" evidence="50">
    <location>
        <begin position="603"/>
        <end position="614"/>
    </location>
</feature>
<feature type="strand" evidence="50">
    <location>
        <begin position="616"/>
        <end position="618"/>
    </location>
</feature>
<feature type="strand" evidence="50">
    <location>
        <begin position="620"/>
        <end position="629"/>
    </location>
</feature>
<feature type="helix" evidence="50">
    <location>
        <begin position="635"/>
        <end position="651"/>
    </location>
</feature>
<feature type="strand" evidence="50">
    <location>
        <begin position="660"/>
        <end position="664"/>
    </location>
</feature>
<feature type="strand" evidence="50">
    <location>
        <begin position="666"/>
        <end position="669"/>
    </location>
</feature>
<feature type="strand" evidence="50">
    <location>
        <begin position="671"/>
        <end position="675"/>
    </location>
</feature>
<feature type="strand" evidence="52">
    <location>
        <begin position="678"/>
        <end position="681"/>
    </location>
</feature>
<feature type="helix" evidence="50">
    <location>
        <begin position="682"/>
        <end position="688"/>
    </location>
</feature>
<feature type="helix" evidence="55">
    <location>
        <begin position="690"/>
        <end position="692"/>
    </location>
</feature>
<feature type="helix" evidence="51">
    <location>
        <begin position="769"/>
        <end position="774"/>
    </location>
</feature>
<feature type="turn" evidence="55">
    <location>
        <begin position="777"/>
        <end position="782"/>
    </location>
</feature>
<feature type="helix" evidence="50">
    <location>
        <begin position="792"/>
        <end position="811"/>
    </location>
</feature>
<feature type="helix" evidence="50">
    <location>
        <begin position="821"/>
        <end position="823"/>
    </location>
</feature>
<feature type="strand" evidence="50">
    <location>
        <begin position="824"/>
        <end position="827"/>
    </location>
</feature>
<feature type="turn" evidence="50">
    <location>
        <begin position="828"/>
        <end position="830"/>
    </location>
</feature>
<feature type="strand" evidence="50">
    <location>
        <begin position="831"/>
        <end position="834"/>
    </location>
</feature>
<feature type="helix" evidence="50">
    <location>
        <begin position="838"/>
        <end position="840"/>
    </location>
</feature>
<feature type="helix" evidence="50">
    <location>
        <begin position="843"/>
        <end position="845"/>
    </location>
</feature>
<feature type="strand" evidence="50">
    <location>
        <begin position="849"/>
        <end position="851"/>
    </location>
</feature>
<feature type="strand" evidence="50">
    <location>
        <begin position="853"/>
        <end position="857"/>
    </location>
</feature>
<feature type="helix" evidence="50">
    <location>
        <begin position="859"/>
        <end position="861"/>
    </location>
</feature>
<feature type="helix" evidence="50">
    <location>
        <begin position="864"/>
        <end position="869"/>
    </location>
</feature>
<feature type="helix" evidence="50">
    <location>
        <begin position="874"/>
        <end position="889"/>
    </location>
</feature>
<feature type="helix" evidence="50">
    <location>
        <begin position="903"/>
        <end position="910"/>
    </location>
</feature>
<feature type="helix" evidence="50">
    <location>
        <begin position="923"/>
        <end position="932"/>
    </location>
</feature>
<feature type="helix" evidence="50">
    <location>
        <begin position="937"/>
        <end position="939"/>
    </location>
</feature>
<feature type="helix" evidence="50">
    <location>
        <begin position="943"/>
        <end position="953"/>
    </location>
</feature>
<feature type="helix" evidence="55">
    <location>
        <begin position="956"/>
        <end position="971"/>
    </location>
</feature>
<sequence length="1089" mass="122670">MGTSHPAFLVLGCLLTGLSLILCQLSLPSILPNENEKVVQLNSSFSLRCFGESEVSWQYPMSEEESSDVEIRNEENNSGLFVTVLEVSSASAAHTGLYTCYYNHTQTEENELEGRHIYIYVPDPDVAFVPLGMTDYLVIVEDDDSAIIPCRTTDPETPVTLHNSEGVVPASYDSRQGFNGTFTVGPYICEATVKGKKFQTIPFNVYALKATSELDLEMEALKTVYKSGETIVVTCAVFNNEVVDLQWTYPGEVKGKGITMLEEIKVPSIKLVYTLTVPEATVKDSGDYECAARQATREVKEMKKVTISVHEKGFIEIKPTFSQLEAVNLHEVKHFVVEVRAYPPPRISWLKNNLTLIENLTEITTDVEKIQEIRYRSKLKLIRAKEEDSGHYTIVAQNEDAVKSYTFELLTQVPSSILDLVDDHHGSTGGQTVRCTAEGTPLPDIEWMICKDIKKCNNETSWTILANNVSNIITEIHSRDRSTVEGRVTFAKVEETIAVRCLAKNLLGAENRELKLVAPTLRSELTVAAAVLVLLVIVIISLIVLVVIWKQKPRYEIRWRVIESISPDGHEYIYVDPMQLPYDSRWEFPRDGLVLGRVLGSGAFGKVVEGTAYGLSRSQPVMKVAVKMLKPTARSSEKQALMSELKIMTHLGPHLNIVNLLGACTKSGPIYIITEYCFYGDLVNYLHKNRDSFLSHHPEKPKKELDIFGLNPADESTRSYVILSFENNGDYMDMKQADTTQYVPMLERKEVSKYSDIQRSLYDRPASYKKKSMLDSEVKNLLSDDNSEGLTLLDLLSFTYQVARGMEFLASKNCVHRDLAARNVLLAQGKIVKICDFGLARDIMHDSNYVSKGSTFLPVKWMAPESIFDNLYTTLSDVWSYGILLWEIFSLGGTPYPGMMVDSTFYNKIKSGYRMAKPDHATSEVYEIMVKCWNSEPEKRPSFYHLSEIVENLLPGQYKKSYEKIHLDFLKSDHPAVARMRVDSDNAYIGVTYKNEEDKLKDWEGGLDEQRLSADSGYIIPLPDIDPVPEEEDLGKRNRHSSQTSEESAIETGSSSSTFIKREDETIEDIDMMDDIGIDSSDLVEDSFL</sequence>
<proteinExistence type="evidence at protein level"/>